<organismHost>
    <name type="scientific">Escherichia coli</name>
    <dbReference type="NCBI Taxonomy" id="562"/>
</organismHost>
<sequence length="903" mass="104613">MKEFYLTVEQIGDSIFERYIDSNGRERTREVEYKPSLFAHCPESQATKYFDIYGKPCTRKLFANMRDASQWIKRMEDIGLEALGMDDFKLAYLSDTYNYEIKYDHTKIRVANFDIEVTSPDGFPEPSQAKHPIDAITHYDSIDDRFYVFDLLNSPYGNVEEWSIEIAAKLQEQGGDEVPSEIIDKIIYMPFDNEKELLMEYLNFWQQKTPVILTGWNVESFDIPYVYNRIKNIFGESTAKRLSPHRKTRVKVIENMYGSREIITLFGISVLDYIDLYKKFSFTNQPSYSLDYISEFELNVGKLKYDGPISKLRESNHQRYISYNIIDVYRVLQIDAKRQFINLSLDMGYYAKIQIQSVFSPIKTWDAIIFNSLKEQNKVIPQGRSHPVQPYPGAFVKEPIPNRYKYVMSFDLTSLYPSIIRQVNISPETIAGTFKVAPLHDYINAVAERPSDVYSCSPNGMMYYKDRDGVVPTEITKVFNQRKEHKGYMLAAQRNGEIIKEALHNPNLSVDEPLDVDYRFDFSDEIKEKIKKLSAKSLNEMLFRAQRTEVAGMTAQINRKLLINSLYGALGNVWFRYYDLRNATAITTFGQMALQWIERKVNEYLNEVCGTEGEAFVLYGDTDSIYVSADKIIDKVGESKFRDTNHWVDFLDKFARERMEPAIDRGFREMCEYMNNKQHLMFMDREAIAGPPLGSKGIGGFWTGKKRYALNVWDMEGTRYAEPKLKIMGLETQKSSTPKAVQKALKECIRRMLQEGEESLQEYFKEFEKEFRQLNYISIASVSSANNIAKYDVGGFPGPKCPFHIRGILTYNRAIKGNIDAPQVVEGEKVYVLPLREGNPFGDKCIAWPSGTEITDLIKDDVLHWMDYTVLLEKTFIKPLEGFTSAAKLDYEKKASLFDMFDF</sequence>
<name>DPOL_BPR69</name>
<feature type="chain" id="PRO_0000046547" description="DNA-directed DNA polymerase">
    <location>
        <begin position="1"/>
        <end position="903"/>
    </location>
</feature>
<feature type="region of interest" description="3'-5'exonuclease" evidence="1 21">
    <location>
        <begin position="103"/>
        <end position="340"/>
    </location>
</feature>
<feature type="region of interest" description="Beta hairpin" evidence="1 5">
    <location>
        <begin position="248"/>
        <end position="264"/>
    </location>
</feature>
<feature type="region of interest" description="Polymerase" evidence="1 21">
    <location>
        <begin position="380"/>
        <end position="903"/>
    </location>
</feature>
<feature type="region of interest" description="Binding of DNA in B-conformation" evidence="1 3 20">
    <location>
        <begin position="705"/>
        <end position="708"/>
    </location>
</feature>
<feature type="region of interest" description="Interaction with the polymerase clamp" evidence="1">
    <location>
        <begin position="897"/>
        <end position="903"/>
    </location>
</feature>
<feature type="binding site" evidence="1">
    <location>
        <position position="114"/>
    </location>
    <ligand>
        <name>Mg(2+)</name>
        <dbReference type="ChEBI" id="CHEBI:18420"/>
        <label>1</label>
        <note>catalytic; for 3'-5' exonuclease activity</note>
    </ligand>
</feature>
<feature type="binding site" evidence="1">
    <location>
        <position position="116"/>
    </location>
    <ligand>
        <name>Mg(2+)</name>
        <dbReference type="ChEBI" id="CHEBI:18420"/>
        <label>1</label>
        <note>catalytic; for 3'-5' exonuclease activity</note>
    </ligand>
</feature>
<feature type="binding site" evidence="1 33">
    <location>
        <position position="222"/>
    </location>
    <ligand>
        <name>Mg(2+)</name>
        <dbReference type="ChEBI" id="CHEBI:18420"/>
        <label>2</label>
        <note>catalytic; for 3'-5' exonuclease activity</note>
    </ligand>
</feature>
<feature type="binding site" evidence="1 33">
    <location>
        <position position="327"/>
    </location>
    <ligand>
        <name>Mg(2+)</name>
        <dbReference type="ChEBI" id="CHEBI:18420"/>
        <label>1</label>
        <note>catalytic; for 3'-5' exonuclease activity</note>
    </ligand>
</feature>
<feature type="binding site" evidence="1 33">
    <location>
        <position position="327"/>
    </location>
    <ligand>
        <name>Mg(2+)</name>
        <dbReference type="ChEBI" id="CHEBI:18420"/>
        <label>2</label>
        <note>catalytic; for 3'-5' exonuclease activity</note>
    </ligand>
</feature>
<feature type="binding site" evidence="1 4 6 13 14 15 22 23 26 27 29 32 33 34 35 43 44 51 76 78 79">
    <location>
        <position position="411"/>
    </location>
    <ligand>
        <name>Mg(2+)</name>
        <dbReference type="ChEBI" id="CHEBI:18420"/>
        <label>3</label>
        <note>catalytic; for polymerase activity</note>
    </ligand>
</feature>
<feature type="binding site" evidence="1 4 6 13 14 15 22 23 26 27 29 32 33 34 35 43 44 51 76 78 79">
    <location>
        <position position="411"/>
    </location>
    <ligand>
        <name>Mg(2+)</name>
        <dbReference type="ChEBI" id="CHEBI:18420"/>
        <label>4</label>
        <note>catalytic; for polymerase activity</note>
    </ligand>
</feature>
<feature type="binding site" evidence="1 6 13 14 26 33 34 43 44 51 76 78 79">
    <location>
        <position position="412"/>
    </location>
    <ligand>
        <name>Mg(2+)</name>
        <dbReference type="ChEBI" id="CHEBI:18420"/>
        <label>4</label>
        <note>catalytic; for polymerase activity</note>
    </ligand>
</feature>
<feature type="binding site" evidence="1 36 47 48 49 55 60 61 63 66 68 73 83 84 85 86 94 102 107 108 109 110 113 114 115 116 119 120 121 122 123 124 125 126 127 128 129 130 131 132 133 134">
    <location>
        <begin position="414"/>
        <end position="416"/>
    </location>
    <ligand>
        <name>substrate</name>
    </ligand>
</feature>
<feature type="binding site" evidence="1 36 47 48 49 55 60 61 63 66 68 73 83 84 85 86 94 102 107 108 109 110 113 114 115 116 119 120 121 122 123 124 125 126 127 128 129 130 131 132 133 134">
    <location>
        <position position="482"/>
    </location>
    <ligand>
        <name>substrate</name>
    </ligand>
</feature>
<feature type="binding site" evidence="1 36 47 48 49 55 60 61 63 66 68 73 83 84 85 86 94 102 108 109 110 113 114 115 116 119 120 121 122 123 124 125 126 127 128 129 130 131 132 133 134">
    <location>
        <position position="560"/>
    </location>
    <ligand>
        <name>substrate</name>
    </ligand>
</feature>
<feature type="binding site" evidence="1 4 6 8 9 13 14 15 22 23 26 29 32 33 34 35 43 44 51 76 78 79">
    <location>
        <position position="623"/>
    </location>
    <ligand>
        <name>Mg(2+)</name>
        <dbReference type="ChEBI" id="CHEBI:18420"/>
        <label>3</label>
        <note>catalytic; for polymerase activity</note>
    </ligand>
</feature>
<feature type="binding site" evidence="1 4 6 8 9 13 14 15 22 23 26 29 32 33 34 35 43 44 51 76 78 79">
    <location>
        <position position="623"/>
    </location>
    <ligand>
        <name>Mg(2+)</name>
        <dbReference type="ChEBI" id="CHEBI:18420"/>
        <label>4</label>
        <note>catalytic; for polymerase activity</note>
    </ligand>
</feature>
<feature type="site" description="Optimization of metal coordination by the polymerase active site" evidence="1 24 28 32 35">
    <location>
        <position position="621"/>
    </location>
</feature>
<feature type="site" description="Optimization of metal coordination by the polymerase active site" evidence="1 4 16">
    <location>
        <position position="706"/>
    </location>
</feature>
<feature type="site" description="Essential for viral replication" evidence="1 20">
    <location>
        <position position="714"/>
    </location>
</feature>
<feature type="mutagenesis site" description="Complete loss of 3'-5' exonuclease activity." evidence="18">
    <original>D</original>
    <variation>A</variation>
    <location>
        <position position="222"/>
    </location>
</feature>
<feature type="mutagenesis site" description="Complete loss of 3'-5' exonuclease activity." evidence="18">
    <original>D</original>
    <variation>A</variation>
    <location>
        <position position="327"/>
    </location>
</feature>
<feature type="mutagenesis site" description="Decreases base selectivity by several hundred fold." evidence="19">
    <original>L</original>
    <variation>A</variation>
    <variation>G</variation>
    <location>
        <position position="415"/>
    </location>
</feature>
<feature type="mutagenesis site" description="Increased misinsertion, increased mismatch extension and inefficient proofreading." evidence="7">
    <original>L</original>
    <variation>G</variation>
    <variation>F</variation>
    <location>
        <position position="415"/>
    </location>
</feature>
<feature type="mutagenesis site" description="No effect on base selectivity." evidence="19">
    <original>L</original>
    <variation>M</variation>
    <location>
        <position position="415"/>
    </location>
</feature>
<feature type="mutagenesis site" description="No effect on the ability to recognize damaged DNA. Increase in probability of nucleotide incorporation." evidence="8">
    <original>L</original>
    <variation>A</variation>
    <location>
        <position position="561"/>
    </location>
</feature>
<feature type="mutagenesis site" description="Increased incorporation efficiency of correct dNMPs; when associated with A-567." evidence="12">
    <original>S</original>
    <variation>G</variation>
    <location>
        <position position="565"/>
    </location>
</feature>
<feature type="mutagenesis site" description="Inserts both dCMP and dAMP opposite 8-oxoG rapidly and with equal efficiency. 100-fold increase of dAMP and dGMP when situated opposite guanidinohydantoin. Increased incorporation efficiency of correct dNMPs; when associated with G-565." evidence="10 12 17">
    <original>Y</original>
    <variation>A</variation>
    <location>
        <position position="567"/>
    </location>
</feature>
<feature type="mutagenesis site" description="Drastic decrease in the efficiency of incorporation of dGMP." evidence="16">
    <original>D</original>
    <variation>A</variation>
    <location>
        <position position="621"/>
    </location>
</feature>
<feature type="mutagenesis site" description="Almost complete loss of polymerase activity." evidence="16">
    <original>K</original>
    <variation>A</variation>
    <location>
        <position position="706"/>
    </location>
</feature>
<feature type="mutagenesis site" description="Complete loss of viral replication." evidence="20">
    <original>D</original>
    <variation>A</variation>
    <location>
        <position position="714"/>
    </location>
</feature>
<feature type="strand" evidence="142">
    <location>
        <begin position="4"/>
        <end position="11"/>
    </location>
</feature>
<feature type="strand" evidence="142">
    <location>
        <begin position="14"/>
        <end position="20"/>
    </location>
</feature>
<feature type="strand" evidence="136">
    <location>
        <begin position="22"/>
        <end position="24"/>
    </location>
</feature>
<feature type="strand" evidence="142">
    <location>
        <begin position="26"/>
        <end position="31"/>
    </location>
</feature>
<feature type="strand" evidence="142">
    <location>
        <begin position="36"/>
        <end position="40"/>
    </location>
</feature>
<feature type="strand" evidence="147">
    <location>
        <begin position="43"/>
        <end position="45"/>
    </location>
</feature>
<feature type="strand" evidence="142">
    <location>
        <begin position="48"/>
        <end position="51"/>
    </location>
</feature>
<feature type="strand" evidence="142">
    <location>
        <begin position="56"/>
        <end position="61"/>
    </location>
</feature>
<feature type="helix" evidence="142">
    <location>
        <begin position="65"/>
        <end position="78"/>
    </location>
</feature>
<feature type="strand" evidence="136">
    <location>
        <begin position="82"/>
        <end position="84"/>
    </location>
</feature>
<feature type="helix" evidence="142">
    <location>
        <begin position="88"/>
        <end position="96"/>
    </location>
</feature>
<feature type="helix" evidence="142">
    <location>
        <begin position="105"/>
        <end position="107"/>
    </location>
</feature>
<feature type="strand" evidence="142">
    <location>
        <begin position="110"/>
        <end position="116"/>
    </location>
</feature>
<feature type="strand" evidence="146">
    <location>
        <begin position="120"/>
        <end position="123"/>
    </location>
</feature>
<feature type="turn" evidence="142">
    <location>
        <begin position="126"/>
        <end position="128"/>
    </location>
</feature>
<feature type="strand" evidence="142">
    <location>
        <begin position="135"/>
        <end position="140"/>
    </location>
</feature>
<feature type="turn" evidence="142">
    <location>
        <begin position="141"/>
        <end position="144"/>
    </location>
</feature>
<feature type="strand" evidence="142">
    <location>
        <begin position="145"/>
        <end position="151"/>
    </location>
</feature>
<feature type="strand" evidence="137">
    <location>
        <begin position="152"/>
        <end position="156"/>
    </location>
</feature>
<feature type="helix" evidence="142">
    <location>
        <begin position="164"/>
        <end position="168"/>
    </location>
</feature>
<feature type="helix" evidence="142">
    <location>
        <begin position="171"/>
        <end position="173"/>
    </location>
</feature>
<feature type="turn" evidence="137">
    <location>
        <begin position="176"/>
        <end position="179"/>
    </location>
</feature>
<feature type="helix" evidence="142">
    <location>
        <begin position="180"/>
        <end position="183"/>
    </location>
</feature>
<feature type="strand" evidence="142">
    <location>
        <begin position="186"/>
        <end position="193"/>
    </location>
</feature>
<feature type="helix" evidence="142">
    <location>
        <begin position="194"/>
        <end position="207"/>
    </location>
</feature>
<feature type="strand" evidence="142">
    <location>
        <begin position="211"/>
        <end position="214"/>
    </location>
</feature>
<feature type="turn" evidence="142">
    <location>
        <begin position="218"/>
        <end position="221"/>
    </location>
</feature>
<feature type="helix" evidence="142">
    <location>
        <begin position="222"/>
        <end position="234"/>
    </location>
</feature>
<feature type="helix" evidence="142">
    <location>
        <begin position="236"/>
        <end position="239"/>
    </location>
</feature>
<feature type="helix" evidence="142">
    <location>
        <begin position="240"/>
        <end position="242"/>
    </location>
</feature>
<feature type="strand" evidence="142">
    <location>
        <begin position="248"/>
        <end position="255"/>
    </location>
</feature>
<feature type="strand" evidence="142">
    <location>
        <begin position="258"/>
        <end position="265"/>
    </location>
</feature>
<feature type="strand" evidence="135">
    <location>
        <begin position="269"/>
        <end position="272"/>
    </location>
</feature>
<feature type="helix" evidence="142">
    <location>
        <begin position="273"/>
        <end position="280"/>
    </location>
</feature>
<feature type="helix" evidence="142">
    <location>
        <begin position="290"/>
        <end position="298"/>
    </location>
</feature>
<feature type="helix" evidence="142">
    <location>
        <begin position="309"/>
        <end position="311"/>
    </location>
</feature>
<feature type="helix" evidence="142">
    <location>
        <begin position="312"/>
        <end position="338"/>
    </location>
</feature>
<feature type="helix" evidence="142">
    <location>
        <begin position="340"/>
        <end position="351"/>
    </location>
</feature>
<feature type="helix" evidence="142">
    <location>
        <begin position="355"/>
        <end position="359"/>
    </location>
</feature>
<feature type="helix" evidence="142">
    <location>
        <begin position="361"/>
        <end position="374"/>
    </location>
</feature>
<feature type="turn" evidence="142">
    <location>
        <begin position="375"/>
        <end position="377"/>
    </location>
</feature>
<feature type="strand" evidence="145">
    <location>
        <begin position="402"/>
        <end position="404"/>
    </location>
</feature>
<feature type="strand" evidence="142">
    <location>
        <begin position="405"/>
        <end position="412"/>
    </location>
</feature>
<feature type="helix" evidence="142">
    <location>
        <begin position="415"/>
        <end position="423"/>
    </location>
</feature>
<feature type="helix" evidence="142">
    <location>
        <begin position="427"/>
        <end position="429"/>
    </location>
</feature>
<feature type="strand" evidence="142">
    <location>
        <begin position="430"/>
        <end position="433"/>
    </location>
</feature>
<feature type="helix" evidence="142">
    <location>
        <begin position="439"/>
        <end position="443"/>
    </location>
</feature>
<feature type="strand" evidence="142">
    <location>
        <begin position="452"/>
        <end position="456"/>
    </location>
</feature>
<feature type="strand" evidence="142">
    <location>
        <begin position="460"/>
        <end position="463"/>
    </location>
</feature>
<feature type="strand" evidence="141">
    <location>
        <begin position="465"/>
        <end position="467"/>
    </location>
</feature>
<feature type="helix" evidence="142">
    <location>
        <begin position="470"/>
        <end position="502"/>
    </location>
</feature>
<feature type="strand" evidence="148">
    <location>
        <begin position="503"/>
        <end position="505"/>
    </location>
</feature>
<feature type="strand" evidence="141">
    <location>
        <begin position="507"/>
        <end position="509"/>
    </location>
</feature>
<feature type="strand" evidence="139">
    <location>
        <begin position="518"/>
        <end position="520"/>
    </location>
</feature>
<feature type="helix" evidence="142">
    <location>
        <begin position="524"/>
        <end position="530"/>
    </location>
</feature>
<feature type="strand" evidence="143">
    <location>
        <begin position="531"/>
        <end position="533"/>
    </location>
</feature>
<feature type="helix" evidence="142">
    <location>
        <begin position="535"/>
        <end position="569"/>
    </location>
</feature>
<feature type="helix" evidence="142">
    <location>
        <begin position="580"/>
        <end position="609"/>
    </location>
</feature>
<feature type="strand" evidence="142">
    <location>
        <begin position="617"/>
        <end position="621"/>
    </location>
</feature>
<feature type="strand" evidence="142">
    <location>
        <begin position="624"/>
        <end position="628"/>
    </location>
</feature>
<feature type="helix" evidence="142">
    <location>
        <begin position="630"/>
        <end position="636"/>
    </location>
</feature>
<feature type="helix" evidence="142">
    <location>
        <begin position="638"/>
        <end position="640"/>
    </location>
</feature>
<feature type="helix" evidence="142">
    <location>
        <begin position="644"/>
        <end position="657"/>
    </location>
</feature>
<feature type="helix" evidence="142">
    <location>
        <begin position="659"/>
        <end position="673"/>
    </location>
</feature>
<feature type="strand" evidence="142">
    <location>
        <begin position="683"/>
        <end position="689"/>
    </location>
</feature>
<feature type="strand" evidence="136">
    <location>
        <begin position="693"/>
        <end position="695"/>
    </location>
</feature>
<feature type="strand" evidence="142">
    <location>
        <begin position="700"/>
        <end position="704"/>
    </location>
</feature>
<feature type="strand" evidence="142">
    <location>
        <begin position="707"/>
        <end position="715"/>
    </location>
</feature>
<feature type="strand" evidence="142">
    <location>
        <begin position="718"/>
        <end position="730"/>
    </location>
</feature>
<feature type="helix" evidence="142">
    <location>
        <begin position="731"/>
        <end position="733"/>
    </location>
</feature>
<feature type="helix" evidence="142">
    <location>
        <begin position="739"/>
        <end position="754"/>
    </location>
</feature>
<feature type="helix" evidence="142">
    <location>
        <begin position="757"/>
        <end position="770"/>
    </location>
</feature>
<feature type="helix" evidence="142">
    <location>
        <begin position="771"/>
        <end position="773"/>
    </location>
</feature>
<feature type="helix" evidence="142">
    <location>
        <begin position="776"/>
        <end position="779"/>
    </location>
</feature>
<feature type="strand" evidence="142">
    <location>
        <begin position="781"/>
        <end position="784"/>
    </location>
</feature>
<feature type="helix" evidence="142">
    <location>
        <begin position="789"/>
        <end position="791"/>
    </location>
</feature>
<feature type="strand" evidence="140">
    <location>
        <begin position="792"/>
        <end position="797"/>
    </location>
</feature>
<feature type="helix" evidence="142">
    <location>
        <begin position="803"/>
        <end position="814"/>
    </location>
</feature>
<feature type="turn" evidence="142">
    <location>
        <begin position="815"/>
        <end position="817"/>
    </location>
</feature>
<feature type="strand" evidence="142">
    <location>
        <begin position="819"/>
        <end position="821"/>
    </location>
</feature>
<feature type="strand" evidence="142">
    <location>
        <begin position="828"/>
        <end position="835"/>
    </location>
</feature>
<feature type="strand" evidence="144">
    <location>
        <begin position="837"/>
        <end position="839"/>
    </location>
</feature>
<feature type="strand" evidence="142">
    <location>
        <begin position="842"/>
        <end position="849"/>
    </location>
</feature>
<feature type="helix" evidence="142">
    <location>
        <begin position="856"/>
        <end position="865"/>
    </location>
</feature>
<feature type="helix" evidence="142">
    <location>
        <begin position="868"/>
        <end position="875"/>
    </location>
</feature>
<feature type="helix" evidence="142">
    <location>
        <begin position="877"/>
        <end position="887"/>
    </location>
</feature>
<feature type="strand" evidence="138">
    <location>
        <begin position="891"/>
        <end position="894"/>
    </location>
</feature>
<feature type="helix" evidence="142">
    <location>
        <begin position="897"/>
        <end position="900"/>
    </location>
</feature>
<evidence type="ECO:0000255" key="1">
    <source>
        <dbReference type="HAMAP-Rule" id="MF_04100"/>
    </source>
</evidence>
<evidence type="ECO:0000269" key="2">
    <source>
    </source>
</evidence>
<evidence type="ECO:0000269" key="3">
    <source>
    </source>
</evidence>
<evidence type="ECO:0000269" key="4">
    <source>
    </source>
</evidence>
<evidence type="ECO:0000269" key="5">
    <source>
    </source>
</evidence>
<evidence type="ECO:0000269" key="6">
    <source>
    </source>
</evidence>
<evidence type="ECO:0000269" key="7">
    <source>
    </source>
</evidence>
<evidence type="ECO:0000269" key="8">
    <source>
    </source>
</evidence>
<evidence type="ECO:0000269" key="9">
    <source>
    </source>
</evidence>
<evidence type="ECO:0000269" key="10">
    <source>
    </source>
</evidence>
<evidence type="ECO:0000269" key="11">
    <source>
    </source>
</evidence>
<evidence type="ECO:0000269" key="12">
    <source>
    </source>
</evidence>
<evidence type="ECO:0000269" key="13">
    <source>
    </source>
</evidence>
<evidence type="ECO:0000269" key="14">
    <source>
    </source>
</evidence>
<evidence type="ECO:0000269" key="15">
    <source>
    </source>
</evidence>
<evidence type="ECO:0000269" key="16">
    <source>
    </source>
</evidence>
<evidence type="ECO:0000269" key="17">
    <source>
    </source>
</evidence>
<evidence type="ECO:0000269" key="18">
    <source>
    </source>
</evidence>
<evidence type="ECO:0000269" key="19">
    <source>
    </source>
</evidence>
<evidence type="ECO:0000269" key="20">
    <source>
    </source>
</evidence>
<evidence type="ECO:0000269" key="21">
    <source>
    </source>
</evidence>
<evidence type="ECO:0000305" key="22">
    <source>
    </source>
</evidence>
<evidence type="ECO:0000305" key="23">
    <source>
    </source>
</evidence>
<evidence type="ECO:0000305" key="24">
    <source>
    </source>
</evidence>
<evidence type="ECO:0000305" key="25">
    <source>
    </source>
</evidence>
<evidence type="ECO:0000305" key="26">
    <source>
    </source>
</evidence>
<evidence type="ECO:0000305" key="27">
    <source>
    </source>
</evidence>
<evidence type="ECO:0000305" key="28">
    <source>
    </source>
</evidence>
<evidence type="ECO:0000305" key="29">
    <source>
    </source>
</evidence>
<evidence type="ECO:0000305" key="30">
    <source>
    </source>
</evidence>
<evidence type="ECO:0000305" key="31">
    <source>
    </source>
</evidence>
<evidence type="ECO:0000305" key="32">
    <source>
    </source>
</evidence>
<evidence type="ECO:0000305" key="33">
    <source>
    </source>
</evidence>
<evidence type="ECO:0000305" key="34">
    <source>
    </source>
</evidence>
<evidence type="ECO:0000305" key="35">
    <source>
    </source>
</evidence>
<evidence type="ECO:0007744" key="36">
    <source>
        <dbReference type="PDB" id="1IG9"/>
    </source>
</evidence>
<evidence type="ECO:0007744" key="37">
    <source>
        <dbReference type="PDB" id="1IH7"/>
    </source>
</evidence>
<evidence type="ECO:0007744" key="38">
    <source>
        <dbReference type="PDB" id="1Q9X"/>
    </source>
</evidence>
<evidence type="ECO:0007744" key="39">
    <source>
        <dbReference type="PDB" id="1Q9Y"/>
    </source>
</evidence>
<evidence type="ECO:0007744" key="40">
    <source>
        <dbReference type="PDB" id="2DTU"/>
    </source>
</evidence>
<evidence type="ECO:0007744" key="41">
    <source>
        <dbReference type="PDB" id="2DY4"/>
    </source>
</evidence>
<evidence type="ECO:0007744" key="42">
    <source>
        <dbReference type="PDB" id="2OYQ"/>
    </source>
</evidence>
<evidence type="ECO:0007744" key="43">
    <source>
        <dbReference type="PDB" id="2OZM"/>
    </source>
</evidence>
<evidence type="ECO:0007744" key="44">
    <source>
        <dbReference type="PDB" id="2OZS"/>
    </source>
</evidence>
<evidence type="ECO:0007744" key="45">
    <source>
        <dbReference type="PDB" id="2P5G"/>
    </source>
</evidence>
<evidence type="ECO:0007744" key="46">
    <source>
        <dbReference type="PDB" id="2P5O"/>
    </source>
</evidence>
<evidence type="ECO:0007744" key="47">
    <source>
        <dbReference type="PDB" id="3CFP"/>
    </source>
</evidence>
<evidence type="ECO:0007744" key="48">
    <source>
        <dbReference type="PDB" id="3CFR"/>
    </source>
</evidence>
<evidence type="ECO:0007744" key="49">
    <source>
        <dbReference type="PDB" id="3CQ8"/>
    </source>
</evidence>
<evidence type="ECO:0007744" key="50">
    <source>
        <dbReference type="PDB" id="3KD1"/>
    </source>
</evidence>
<evidence type="ECO:0007744" key="51">
    <source>
        <dbReference type="PDB" id="3KD5"/>
    </source>
</evidence>
<evidence type="ECO:0007744" key="52">
    <source>
        <dbReference type="PDB" id="3L8B"/>
    </source>
</evidence>
<evidence type="ECO:0007744" key="53">
    <source>
        <dbReference type="PDB" id="3LDS"/>
    </source>
</evidence>
<evidence type="ECO:0007744" key="54">
    <source>
        <dbReference type="PDB" id="3LZI"/>
    </source>
</evidence>
<evidence type="ECO:0007744" key="55">
    <source>
        <dbReference type="PDB" id="3LZJ"/>
    </source>
</evidence>
<evidence type="ECO:0007744" key="56">
    <source>
        <dbReference type="PDB" id="3NAE"/>
    </source>
</evidence>
<evidence type="ECO:0007744" key="57">
    <source>
        <dbReference type="PDB" id="3NCI"/>
    </source>
</evidence>
<evidence type="ECO:0007744" key="58">
    <source>
        <dbReference type="PDB" id="3NDK"/>
    </source>
</evidence>
<evidence type="ECO:0007744" key="59">
    <source>
        <dbReference type="PDB" id="3NE6"/>
    </source>
</evidence>
<evidence type="ECO:0007744" key="60">
    <source>
        <dbReference type="PDB" id="3NGI"/>
    </source>
</evidence>
<evidence type="ECO:0007744" key="61">
    <source>
        <dbReference type="PDB" id="3NHG"/>
    </source>
</evidence>
<evidence type="ECO:0007744" key="62">
    <source>
        <dbReference type="PDB" id="3QEI"/>
    </source>
</evidence>
<evidence type="ECO:0007744" key="63">
    <source>
        <dbReference type="PDB" id="3QEP"/>
    </source>
</evidence>
<evidence type="ECO:0007744" key="64">
    <source>
        <dbReference type="PDB" id="3QER"/>
    </source>
</evidence>
<evidence type="ECO:0007744" key="65">
    <source>
        <dbReference type="PDB" id="3QES"/>
    </source>
</evidence>
<evidence type="ECO:0007744" key="66">
    <source>
        <dbReference type="PDB" id="3QET"/>
    </source>
</evidence>
<evidence type="ECO:0007744" key="67">
    <source>
        <dbReference type="PDB" id="3QNN"/>
    </source>
</evidence>
<evidence type="ECO:0007744" key="68">
    <source>
        <dbReference type="PDB" id="3QNO"/>
    </source>
</evidence>
<evidence type="ECO:0007744" key="69">
    <source>
        <dbReference type="PDB" id="3RMA"/>
    </source>
</evidence>
<evidence type="ECO:0007744" key="70">
    <source>
        <dbReference type="PDB" id="3RMB"/>
    </source>
</evidence>
<evidence type="ECO:0007744" key="71">
    <source>
        <dbReference type="PDB" id="3RMC"/>
    </source>
</evidence>
<evidence type="ECO:0007744" key="72">
    <source>
        <dbReference type="PDB" id="3RMD"/>
    </source>
</evidence>
<evidence type="ECO:0007744" key="73">
    <source>
        <dbReference type="PDB" id="3RWU"/>
    </source>
</evidence>
<evidence type="ECO:0007744" key="74">
    <source>
        <dbReference type="PDB" id="3S9H"/>
    </source>
</evidence>
<evidence type="ECO:0007744" key="75">
    <source>
        <dbReference type="PDB" id="3SCX"/>
    </source>
</evidence>
<evidence type="ECO:0007744" key="76">
    <source>
        <dbReference type="PDB" id="3SI6"/>
    </source>
</evidence>
<evidence type="ECO:0007744" key="77">
    <source>
        <dbReference type="PDB" id="3SJJ"/>
    </source>
</evidence>
<evidence type="ECO:0007744" key="78">
    <source>
        <dbReference type="PDB" id="3SNN"/>
    </source>
</evidence>
<evidence type="ECO:0007744" key="79">
    <source>
        <dbReference type="PDB" id="3SPY"/>
    </source>
</evidence>
<evidence type="ECO:0007744" key="80">
    <source>
        <dbReference type="PDB" id="3SPZ"/>
    </source>
</evidence>
<evidence type="ECO:0007744" key="81">
    <source>
        <dbReference type="PDB" id="3SQ0"/>
    </source>
</evidence>
<evidence type="ECO:0007744" key="82">
    <source>
        <dbReference type="PDB" id="3SQ1"/>
    </source>
</evidence>
<evidence type="ECO:0007744" key="83">
    <source>
        <dbReference type="PDB" id="3SQ2"/>
    </source>
</evidence>
<evidence type="ECO:0007744" key="84">
    <source>
        <dbReference type="PDB" id="3SQ4"/>
    </source>
</evidence>
<evidence type="ECO:0007744" key="85">
    <source>
        <dbReference type="PDB" id="3SUN"/>
    </source>
</evidence>
<evidence type="ECO:0007744" key="86">
    <source>
        <dbReference type="PDB" id="3SUO"/>
    </source>
</evidence>
<evidence type="ECO:0007744" key="87">
    <source>
        <dbReference type="PDB" id="3SUP"/>
    </source>
</evidence>
<evidence type="ECO:0007744" key="88">
    <source>
        <dbReference type="PDB" id="3SUQ"/>
    </source>
</evidence>
<evidence type="ECO:0007744" key="89">
    <source>
        <dbReference type="PDB" id="3TAB"/>
    </source>
</evidence>
<evidence type="ECO:0007744" key="90">
    <source>
        <dbReference type="PDB" id="3TAE"/>
    </source>
</evidence>
<evidence type="ECO:0007744" key="91">
    <source>
        <dbReference type="PDB" id="3TAF"/>
    </source>
</evidence>
<evidence type="ECO:0007744" key="92">
    <source>
        <dbReference type="PDB" id="3TAG"/>
    </source>
</evidence>
<evidence type="ECO:0007744" key="93">
    <source>
        <dbReference type="PDB" id="3UIQ"/>
    </source>
</evidence>
<evidence type="ECO:0007744" key="94">
    <source>
        <dbReference type="PDB" id="4DTJ"/>
    </source>
</evidence>
<evidence type="ECO:0007744" key="95">
    <source>
        <dbReference type="PDB" id="4DTM"/>
    </source>
</evidence>
<evidence type="ECO:0007744" key="96">
    <source>
        <dbReference type="PDB" id="4DTN"/>
    </source>
</evidence>
<evidence type="ECO:0007744" key="97">
    <source>
        <dbReference type="PDB" id="4DTO"/>
    </source>
</evidence>
<evidence type="ECO:0007744" key="98">
    <source>
        <dbReference type="PDB" id="4DTP"/>
    </source>
</evidence>
<evidence type="ECO:0007744" key="99">
    <source>
        <dbReference type="PDB" id="4DTR"/>
    </source>
</evidence>
<evidence type="ECO:0007744" key="100">
    <source>
        <dbReference type="PDB" id="4DTS"/>
    </source>
</evidence>
<evidence type="ECO:0007744" key="101">
    <source>
        <dbReference type="PDB" id="4DTU"/>
    </source>
</evidence>
<evidence type="ECO:0007744" key="102">
    <source>
        <dbReference type="PDB" id="4DTX"/>
    </source>
</evidence>
<evidence type="ECO:0007744" key="103">
    <source>
        <dbReference type="PDB" id="4DU1"/>
    </source>
</evidence>
<evidence type="ECO:0007744" key="104">
    <source>
        <dbReference type="PDB" id="4DU3"/>
    </source>
</evidence>
<evidence type="ECO:0007744" key="105">
    <source>
        <dbReference type="PDB" id="4DU4"/>
    </source>
</evidence>
<evidence type="ECO:0007744" key="106">
    <source>
        <dbReference type="PDB" id="4E3S"/>
    </source>
</evidence>
<evidence type="ECO:0007744" key="107">
    <source>
        <dbReference type="PDB" id="4FJ9"/>
    </source>
</evidence>
<evidence type="ECO:0007744" key="108">
    <source>
        <dbReference type="PDB" id="4FJJ"/>
    </source>
</evidence>
<evidence type="ECO:0007744" key="109">
    <source>
        <dbReference type="PDB" id="4FJN"/>
    </source>
</evidence>
<evidence type="ECO:0007744" key="110">
    <source>
        <dbReference type="PDB" id="4FK2"/>
    </source>
</evidence>
<evidence type="ECO:0007744" key="111">
    <source>
        <dbReference type="PDB" id="4I9L"/>
    </source>
</evidence>
<evidence type="ECO:0007744" key="112">
    <source>
        <dbReference type="PDB" id="4I9Q"/>
    </source>
</evidence>
<evidence type="ECO:0007744" key="113">
    <source>
        <dbReference type="PDB" id="4J2A"/>
    </source>
</evidence>
<evidence type="ECO:0007744" key="114">
    <source>
        <dbReference type="PDB" id="4J2B"/>
    </source>
</evidence>
<evidence type="ECO:0007744" key="115">
    <source>
        <dbReference type="PDB" id="4J2D"/>
    </source>
</evidence>
<evidence type="ECO:0007744" key="116">
    <source>
        <dbReference type="PDB" id="4J2E"/>
    </source>
</evidence>
<evidence type="ECO:0007744" key="117">
    <source>
        <dbReference type="PDB" id="4KHN"/>
    </source>
</evidence>
<evidence type="ECO:0007744" key="118">
    <source>
        <dbReference type="PDB" id="4KHQ"/>
    </source>
</evidence>
<evidence type="ECO:0007744" key="119">
    <source>
        <dbReference type="PDB" id="4KHS"/>
    </source>
</evidence>
<evidence type="ECO:0007744" key="120">
    <source>
        <dbReference type="PDB" id="4KHU"/>
    </source>
</evidence>
<evidence type="ECO:0007744" key="121">
    <source>
        <dbReference type="PDB" id="4KHW"/>
    </source>
</evidence>
<evidence type="ECO:0007744" key="122">
    <source>
        <dbReference type="PDB" id="4KHY"/>
    </source>
</evidence>
<evidence type="ECO:0007744" key="123">
    <source>
        <dbReference type="PDB" id="4KI4"/>
    </source>
</evidence>
<evidence type="ECO:0007744" key="124">
    <source>
        <dbReference type="PDB" id="4KI6"/>
    </source>
</evidence>
<evidence type="ECO:0007744" key="125">
    <source>
        <dbReference type="PDB" id="4M3R"/>
    </source>
</evidence>
<evidence type="ECO:0007744" key="126">
    <source>
        <dbReference type="PDB" id="4M3T"/>
    </source>
</evidence>
<evidence type="ECO:0007744" key="127">
    <source>
        <dbReference type="PDB" id="4M3U"/>
    </source>
</evidence>
<evidence type="ECO:0007744" key="128">
    <source>
        <dbReference type="PDB" id="4M3W"/>
    </source>
</evidence>
<evidence type="ECO:0007744" key="129">
    <source>
        <dbReference type="PDB" id="4M3X"/>
    </source>
</evidence>
<evidence type="ECO:0007744" key="130">
    <source>
        <dbReference type="PDB" id="4M3Y"/>
    </source>
</evidence>
<evidence type="ECO:0007744" key="131">
    <source>
        <dbReference type="PDB" id="4M3Z"/>
    </source>
</evidence>
<evidence type="ECO:0007744" key="132">
    <source>
        <dbReference type="PDB" id="4M41"/>
    </source>
</evidence>
<evidence type="ECO:0007744" key="133">
    <source>
        <dbReference type="PDB" id="4M42"/>
    </source>
</evidence>
<evidence type="ECO:0007744" key="134">
    <source>
        <dbReference type="PDB" id="4M45"/>
    </source>
</evidence>
<evidence type="ECO:0007829" key="135">
    <source>
        <dbReference type="PDB" id="1IH7"/>
    </source>
</evidence>
<evidence type="ECO:0007829" key="136">
    <source>
        <dbReference type="PDB" id="1WAJ"/>
    </source>
</evidence>
<evidence type="ECO:0007829" key="137">
    <source>
        <dbReference type="PDB" id="2ATQ"/>
    </source>
</evidence>
<evidence type="ECO:0007829" key="138">
    <source>
        <dbReference type="PDB" id="2DTU"/>
    </source>
</evidence>
<evidence type="ECO:0007829" key="139">
    <source>
        <dbReference type="PDB" id="2DY4"/>
    </source>
</evidence>
<evidence type="ECO:0007829" key="140">
    <source>
        <dbReference type="PDB" id="3LZJ"/>
    </source>
</evidence>
<evidence type="ECO:0007829" key="141">
    <source>
        <dbReference type="PDB" id="3QEV"/>
    </source>
</evidence>
<evidence type="ECO:0007829" key="142">
    <source>
        <dbReference type="PDB" id="3QEX"/>
    </source>
</evidence>
<evidence type="ECO:0007829" key="143">
    <source>
        <dbReference type="PDB" id="3RMB"/>
    </source>
</evidence>
<evidence type="ECO:0007829" key="144">
    <source>
        <dbReference type="PDB" id="3RMC"/>
    </source>
</evidence>
<evidence type="ECO:0007829" key="145">
    <source>
        <dbReference type="PDB" id="3RWU"/>
    </source>
</evidence>
<evidence type="ECO:0007829" key="146">
    <source>
        <dbReference type="PDB" id="3SQ1"/>
    </source>
</evidence>
<evidence type="ECO:0007829" key="147">
    <source>
        <dbReference type="PDB" id="4DTU"/>
    </source>
</evidence>
<evidence type="ECO:0007829" key="148">
    <source>
        <dbReference type="PDB" id="4I9L"/>
    </source>
</evidence>
<protein>
    <recommendedName>
        <fullName evidence="1">DNA-directed DNA polymerase</fullName>
        <ecNumber evidence="1 5 7 11 17 20">2.7.7.7</ecNumber>
        <ecNumber evidence="1 5 18 20">3.1.11.-</ecNumber>
    </recommendedName>
    <alternativeName>
        <fullName>Gp43</fullName>
    </alternativeName>
</protein>
<accession>Q38087</accession>
<accession>Q76XX8</accession>
<keyword id="KW-0002">3D-structure</keyword>
<keyword id="KW-0235">DNA replication</keyword>
<keyword id="KW-0238">DNA-binding</keyword>
<keyword id="KW-0239">DNA-directed DNA polymerase</keyword>
<keyword id="KW-0269">Exonuclease</keyword>
<keyword id="KW-0378">Hydrolase</keyword>
<keyword id="KW-0460">Magnesium</keyword>
<keyword id="KW-0479">Metal-binding</keyword>
<keyword id="KW-0511">Multifunctional enzyme</keyword>
<keyword id="KW-0540">Nuclease</keyword>
<keyword id="KW-0548">Nucleotidyltransferase</keyword>
<keyword id="KW-1185">Reference proteome</keyword>
<keyword id="KW-0808">Transferase</keyword>
<keyword id="KW-1194">Viral DNA replication</keyword>
<gene>
    <name type="primary">43</name>
</gene>
<reference key="1">
    <citation type="journal article" date="1995" name="J. Biol. Chem.">
        <title>Modular organization of T4 DNA polymerase. Evidence from phylogenetics.</title>
        <authorList>
            <person name="Wang C.C."/>
            <person name="Yeh L.-S."/>
            <person name="Karam J.D."/>
        </authorList>
    </citation>
    <scope>NUCLEOTIDE SEQUENCE [GENOMIC DNA]</scope>
</reference>
<reference key="2">
    <citation type="submission" date="2003-05" db="EMBL/GenBank/DDBJ databases">
        <title>Enterobacteria phage RB69 complete genome.</title>
        <authorList>
            <person name="Petrov V."/>
            <person name="Nolan J."/>
            <person name="Chin D."/>
            <person name="Letarov A."/>
            <person name="Krisch H.M."/>
            <person name="Karam J.D."/>
        </authorList>
    </citation>
    <scope>NUCLEOTIDE SEQUENCE [LARGE SCALE GENOMIC DNA]</scope>
</reference>
<reference key="3">
    <citation type="journal article" date="2010" name="Virol. J.">
        <title>Structural analysis of bacteriophage T4 DNA replication: a review in the Virology Journal series on bacteriophage T4 and its relatives.</title>
        <authorList>
            <person name="Mueser T.C."/>
            <person name="Hinerman J.M."/>
            <person name="Devos J.M."/>
            <person name="Boyer R.A."/>
            <person name="Williams K.J."/>
        </authorList>
    </citation>
    <scope>REVIEW</scope>
</reference>
<reference key="4">
    <citation type="journal article" date="1997" name="Cell">
        <title>Crystal structure of a pol alpha family replication DNA polymerase from bacteriophage RB69.</title>
        <authorList>
            <person name="Wang J."/>
            <person name="Sattar A.K."/>
            <person name="Wang C.C."/>
            <person name="Karam J.D."/>
            <person name="Konigsberg W.H."/>
            <person name="Steitz T.A."/>
        </authorList>
    </citation>
    <scope>X-RAY CRYSTALLOGRAPHY (2.8 ANGSTROMS)</scope>
    <scope>DOMAIN</scope>
</reference>
<reference key="5">
    <citation type="journal article" date="1999" name="Cell">
        <title>Building a replisome from interacting pieces: sliding clamp complexed to a peptide from DNA polymerase and a polymerase editing complex.</title>
        <authorList>
            <person name="Shamoo Y."/>
            <person name="Steitz T.A."/>
        </authorList>
    </citation>
    <scope>X-RAY CRYSTALLOGRAPHY (2.7 ANGSTROMS) OF COMPLEX WITH THE POLYMERASE CLAMP</scope>
    <scope>INTERACTION WITH THE POLYMERASE CLAMP</scope>
</reference>
<reference evidence="36 37" key="6">
    <citation type="journal article" date="2001" name="Cell">
        <title>Structure of the replicating complex of a pol alpha family DNA polymerase.</title>
        <authorList>
            <person name="Franklin M.C."/>
            <person name="Wang J."/>
            <person name="Steitz T.A."/>
        </authorList>
    </citation>
    <scope>X-RAY CRYSTALLOGRAPHY (2.21 ANGSTROMS) IN COMPLEX WITH CALCIUM AND TTP</scope>
    <scope>COFACTOR</scope>
</reference>
<reference evidence="38 39" key="7">
    <citation type="journal article" date="2004" name="EMBO J.">
        <title>Lesion (in)tolerance reveals insights into DNA replication fidelity.</title>
        <authorList>
            <person name="Freisinger E."/>
            <person name="Grollman A.P."/>
            <person name="Miller H."/>
            <person name="Kisker C."/>
        </authorList>
    </citation>
    <scope>X-RAY CRYSTALLOGRAPHY (2.69 ANGSTROMS) IN COMPLEX WITH CALCIUM</scope>
    <scope>COFACTOR</scope>
</reference>
<reference evidence="46" key="8">
    <citation type="journal article" date="2004" name="EMBO J.">
        <title>Crystallographic snapshots of a replicative DNA polymerase encountering an abasic site.</title>
        <authorList>
            <person name="Hogg M."/>
            <person name="Wallace S.S."/>
            <person name="Doublie S."/>
        </authorList>
    </citation>
    <scope>X-RAY CRYSTALLOGRAPHY (2.80 ANGSTROMS)</scope>
    <scope>COFACTOR</scope>
</reference>
<reference evidence="42 43 44 45" key="9">
    <citation type="journal article" date="2007" name="Biochemistry">
        <title>Caught bending the A-rule: crystal structures of translesion DNA synthesis with a non-natural nucleotide.</title>
        <authorList>
            <person name="Zahn K.E."/>
            <person name="Belrhali H."/>
            <person name="Wallace S.S."/>
            <person name="Doublie S."/>
        </authorList>
    </citation>
    <scope>X-RAY CRYSTALLOGRAPHY (2.75 ANGSTROMS) IN COMPLEX WITH MAGNESIUM</scope>
    <scope>COFACTOR</scope>
</reference>
<reference evidence="40" key="10">
    <citation type="journal article" date="2007" name="J. Biol. Chem.">
        <title>Structural and biochemical investigation of the role in proofreading of a beta hairpin loop found in the exonuclease domain of a replicative DNA polymerase of the B family.</title>
        <authorList>
            <person name="Hogg M."/>
            <person name="Aller P."/>
            <person name="Konigsberg W."/>
            <person name="Wallace S.S."/>
            <person name="Doublie S."/>
        </authorList>
    </citation>
    <scope>X-RAY CRYSTALLOGRAPHY (2.37 ANGSTROMS) OF 1-902</scope>
    <scope>CATALYTIC ACTIVITY</scope>
    <scope>FUNCTION</scope>
</reference>
<reference evidence="41" key="11">
    <citation type="journal article" date="2007" name="Proc. Natl. Acad. Sci. U.S.A.">
        <title>A structural rationale for stalling of a replicative DNA polymerase at the most common oxidative thymine lesion, thymine glycol.</title>
        <authorList>
            <person name="Aller P."/>
            <person name="Rould M.A."/>
            <person name="Hogg M."/>
            <person name="Wallace S.S."/>
            <person name="Doublie S."/>
        </authorList>
    </citation>
    <scope>X-RAY CRYSTALLOGRAPHY (2.65 ANGSTROMS)</scope>
</reference>
<reference evidence="49" key="12">
    <citation type="journal article" date="2008" name="Nucleic Acids Res.">
        <title>Characterization of a replicative DNA polymerase mutant with reduced fidelity and increased translesion synthesis capacity.</title>
        <authorList>
            <person name="Zhong X."/>
            <person name="Pedersen L.C."/>
            <person name="Kunkel T.A."/>
        </authorList>
    </citation>
    <scope>X-RAY CRYSTALLOGRAPHY (2.50 ANGSTROMS) IN COMPLEX WITH CALCIUM; DNA AND TTP</scope>
    <scope>FUNCTION</scope>
    <scope>COFACTOR</scope>
    <scope>CATALYTIC ACTIVITY</scope>
    <scope>MUTAGENESIS OF LEU-415</scope>
</reference>
<reference evidence="53" key="13">
    <citation type="journal article" date="2010" name="Biochemistry">
        <title>Kinetics of mismatch formation opposite lesions by the replicative DNA polymerase from bacteriophage RB69.</title>
        <authorList>
            <person name="Hogg M."/>
            <person name="Rudnicki J."/>
            <person name="Midkiff J."/>
            <person name="Reha-Krantz L."/>
            <person name="Doublie S."/>
            <person name="Wallace S.S."/>
        </authorList>
    </citation>
    <scope>X-RAY CRYSTALLOGRAPHY (3.00 ANGSTROMS) IN COMPLEX WITH MANGANESE</scope>
    <scope>MUTAGENESIS OF LEU-561</scope>
    <scope>COFACTOR</scope>
</reference>
<reference evidence="52" key="14">
    <citation type="journal article" date="2010" name="Biochemistry">
        <title>Crystal structure of a replicative DNA polymerase bound to the oxidized guanine lesion guanidinohydantoin.</title>
        <authorList>
            <person name="Aller P."/>
            <person name="Ye Y."/>
            <person name="Wallace S.S."/>
            <person name="Burrows C.J."/>
            <person name="Doublie S."/>
        </authorList>
    </citation>
    <scope>X-RAY CRYSTALLOGRAPHY (2.15 ANGSTROMS)</scope>
    <scope>COFACTOR</scope>
</reference>
<reference evidence="54 55" key="15">
    <citation type="journal article" date="2010" name="Biochemistry">
        <title>Substitution of Ala for Tyr567 in RB69 DNA polymerase allows dAMP to be inserted opposite 7,8-dihydro-8-oxoguanine.</title>
        <authorList>
            <person name="Beckman J."/>
            <person name="Wang M."/>
            <person name="Blaha G."/>
            <person name="Wang J."/>
            <person name="Konigsberg W.H."/>
        </authorList>
    </citation>
    <scope>X-RAY CRYSTALLOGRAPHY (2.05 ANGSTROMS) IN COMPLEX WITH CTP AND CALCIUM</scope>
    <scope>MUTAGENESIS OF TYR-567</scope>
</reference>
<reference evidence="56" key="16">
    <citation type="journal article" date="2010" name="Biochemistry">
        <title>Substitution of Ala for Tyr567 in RB69 DNA polymerase allows dAMP and dGMP to be inserted opposite Guanidinohydantoin.</title>
        <authorList>
            <person name="Beckman J."/>
            <person name="Wang M."/>
            <person name="Blaha G."/>
            <person name="Wang J."/>
            <person name="Konigsberg W.H."/>
        </authorList>
    </citation>
    <scope>X-RAY CRYSTALLOGRAPHY (2.00 ANGSTROMS) IN COMPLEX WITH CALCIUM</scope>
    <scope>MUTAGENESIS OF TYR-567</scope>
    <scope>CATALYTIC ACTIVITY</scope>
</reference>
<reference evidence="83 84 85 86 87 88" key="17">
    <citation type="journal article" date="2011" name="Biochemistry">
        <title>Structure of the 2-aminopurine-cytosine base pair formed in the polymerase active site of the RB69 Y567A-DNA polymerase.</title>
        <authorList>
            <person name="Reha-Krantz L.J."/>
            <person name="Hariharan C."/>
            <person name="Subuddhi U."/>
            <person name="Xia S."/>
            <person name="Zhao C."/>
            <person name="Beckman J."/>
            <person name="Christian T."/>
            <person name="Konigsberg W."/>
        </authorList>
    </citation>
    <scope>X-RAY CRYSTALLOGRAPHY (2.10 ANGSTROMS) OF 1-902 IN COMPLEX WITH DNA AND TTP</scope>
    <scope>MUTAGENESIS OF TYR-567</scope>
</reference>
<reference evidence="89 90 91 92" key="18">
    <citation type="journal article" date="2011" name="Biochemistry">
        <title>The miscoding potential of 5-hydroxycytosine arises due to template instability in the replicative polymerase active site.</title>
        <authorList>
            <person name="Zahn K.E."/>
            <person name="Averill A."/>
            <person name="Wallace S.S."/>
            <person name="Doublie S."/>
        </authorList>
    </citation>
    <scope>X-RAY CRYSTALLOGRAPHY (2.71 ANGSTROMS)</scope>
    <scope>COFACTOR</scope>
</reference>
<reference evidence="57" key="19">
    <citation type="journal article" date="2011" name="Biochemistry">
        <title>Insights into base selectivity from the 1.8 A resolution structure of an RB69 DNA polymerase ternary complex.</title>
        <authorList>
            <person name="Wang M."/>
            <person name="Xia S."/>
            <person name="Blaha G."/>
            <person name="Steitz T.A."/>
            <person name="Konigsberg W.H."/>
            <person name="Wang J."/>
        </authorList>
    </citation>
    <scope>X-RAY CRYSTALLOGRAPHY (1.79 ANGSTROMS) IN COMPLEX WITH CALCIUM</scope>
    <scope>COFACTOR</scope>
</reference>
<reference evidence="74 75 76 77 78 79 80 81 82" key="20">
    <citation type="journal article" date="2011" name="Biochemistry">
        <title>Structural insights into complete metal ion coordination from ternary complexes of B family RB69 DNA polymerase.</title>
        <authorList>
            <person name="Xia S."/>
            <person name="Wang M."/>
            <person name="Blaha G."/>
            <person name="Konigsberg W.H."/>
            <person name="Wang J."/>
        </authorList>
    </citation>
    <scope>X-RAY CRYSTALLOGRAPHY (1.82 ANGSTROMS) OF 1-901 IN COMPLEXES WITH MAGNESIUM AND MANGANESE</scope>
    <scope>COFACTOR</scope>
</reference>
<reference evidence="63 73" key="21">
    <citation type="journal article" date="2011" name="J. Am. Chem. Soc.">
        <title>Hydrogen-bonding capability of a templating difluorotoluene nucleotide residue in an RB69 DNA polymerase ternary complex.</title>
        <authorList>
            <person name="Xia S."/>
            <person name="Konigsberg W.H."/>
            <person name="Wang J."/>
        </authorList>
    </citation>
    <scope>X-RAY CRYSTALLOGRAPHY (1.80 ANGSTROMS) IN COMPLEX WITH ATP; CALCIUM AND TTP</scope>
</reference>
<reference evidence="50 51" key="22">
    <citation type="journal article" date="2011" name="J. Biol. Chem.">
        <title>Phosphonoformic acid inhibits viral replication by trapping the closed form of the DNA polymerase.</title>
        <authorList>
            <person name="Zahn K.E."/>
            <person name="Tchesnokov E.P."/>
            <person name="Gotte M."/>
            <person name="Doublie S."/>
        </authorList>
    </citation>
    <scope>X-RAY CRYSTALLOGRAPHY (2.66 ANGSTROMS) IN COMPLEX WITH MAGNESIUM</scope>
    <scope>COFACTOR</scope>
</reference>
<reference evidence="58 59 60 61" key="23">
    <citation type="journal article" date="2011" name="J. Mol. Biol.">
        <title>Variation in mutation rates caused by RB69pol fidelity mutants can be rationalized on the basis of their kinetic behavior and crystal structures.</title>
        <authorList>
            <person name="Xia S."/>
            <person name="Wang M."/>
            <person name="Lee H.R."/>
            <person name="Sinha A."/>
            <person name="Blaha G."/>
            <person name="Christian T."/>
            <person name="Wang J."/>
            <person name="Konigsberg W."/>
        </authorList>
    </citation>
    <scope>X-RAY CRYSTALLOGRAPHY (1.89 ANGSTROMS) IN COMPLEX WITH CALCIUM AND TTP</scope>
    <scope>MUTAGENESIS OF SER-565 AND TYR-567</scope>
</reference>
<reference evidence="69 70 71 72" key="24">
    <citation type="journal article" date="2011" name="J. Mol. Biol.">
        <title>A crystallographic study of the role of sequence context in thymine glycol bypass by a replicative DNA polymerase serendipitously sheds light on the exonuclease complex.</title>
        <authorList>
            <person name="Aller P."/>
            <person name="Duclos S."/>
            <person name="Wallace S.S."/>
            <person name="Doublie S."/>
        </authorList>
    </citation>
    <scope>X-RAY CRYSTALLOGRAPHY (2.65 ANGSTROMS)</scope>
</reference>
<reference evidence="62 64 65" key="25">
    <citation type="journal article" date="2012" name="Biochemistry">
        <title>Structural basis for differential insertion kinetics of dNMPs opposite a difluorotoluene nucleotide residue.</title>
        <authorList>
            <person name="Xia S."/>
            <person name="Eom S.H."/>
            <person name="Konigsberg W.H."/>
            <person name="Wang J."/>
        </authorList>
    </citation>
    <scope>X-RAY CRYSTALLOGRAPHY (1.96 ANGSTROMS) IN COMPLEX WITH CALCIUM</scope>
</reference>
<reference evidence="103 104 105 106" key="26">
    <citation type="journal article" date="2012" name="Biochemistry">
        <title>Probing minor groove hydrogen bonding interactions between RB69 DNA polymerase and DNA.</title>
        <authorList>
            <person name="Xia S."/>
            <person name="Christian T.D."/>
            <person name="Wang J."/>
            <person name="Konigsberg W.H."/>
        </authorList>
    </citation>
    <scope>X-RAY CRYSTALLOGRAPHY (2.02 ANGSTROMS) IN COMPLEX WITH CALCIUM</scope>
    <scope>FUNCTION</scope>
    <scope>CATALYTIC ACTIVITY</scope>
    <scope>MUTAGENESIS OF ASP-621 AND LYS-706</scope>
    <scope>COFACTOR</scope>
</reference>
<reference evidence="67 68" key="27">
    <citation type="journal article" date="2012" name="Biochemistry">
        <title>Using a fluorescent cytosine analogue tC(o) to probe the effect of the Y567 to Ala substitution on the preinsertion steps of dNMP incorporation by RB69 DNA polymerase.</title>
        <authorList>
            <person name="Xia S."/>
            <person name="Beckman J."/>
            <person name="Wang J."/>
            <person name="Konigsberg W.H."/>
        </authorList>
    </citation>
    <scope>X-RAY CRYSTALLOGRAPHY (1.88 ANGSTROMS) OF 1-901 IN COMPLEX WITH ATP AND CALCIUM</scope>
    <scope>MUTAGENESIS OF TYR-567</scope>
</reference>
<reference evidence="94 95 96 97 98 99 100 101 102" key="28">
    <citation type="journal article" date="2012" name="Biochemistry">
        <title>Contribution of partial charge interactions and base stacking to the efficiency of primer extension at and beyond abasic sites in DNA.</title>
        <authorList>
            <person name="Xia S."/>
            <person name="Vashishtha A."/>
            <person name="Bulkley D."/>
            <person name="Eom S.H."/>
            <person name="Wang J."/>
            <person name="Konigsberg W.H."/>
        </authorList>
    </citation>
    <scope>X-RAY CRYSTALLOGRAPHY (1.84 ANGSTROMS) IN COMPLEXES WITH CALCIUM; DNA; ATP; CTP; GTP AND TTP</scope>
    <scope>CATALYTIC ACTIVITY</scope>
    <scope>FUNCTION</scope>
</reference>
<reference evidence="93" key="29">
    <citation type="journal article" date="2012" name="Protein Sci.">
        <title>Bidentate and tridentate metal-ion coordination states within ternary complexes of RB69 DNA polymerase.</title>
        <authorList>
            <person name="Xia S."/>
            <person name="Eom S.H."/>
            <person name="Konigsberg W.H."/>
            <person name="Wang J."/>
        </authorList>
    </citation>
    <scope>X-RAY CRYSTALLOGRAPHY (1.88 ANGSTROMS) IN COMPLEX WITH CALCIUM</scope>
    <scope>COFACTOR</scope>
</reference>
<reference key="30">
    <citation type="journal article" date="2013" name="J. Am. Chem. Soc.">
        <title>DNA mismatch synthesis complexes provide insights into base selectivity of a B family DNA polymerase.</title>
        <authorList>
            <person name="Xia S."/>
            <person name="Wang J."/>
            <person name="Konigsberg W.H."/>
        </authorList>
    </citation>
    <scope>X-RAY CRYSTALLOGRAPHY (1.87 ANGSTROMS) IN COMPLEX WITH CALCIUM AND TTP</scope>
    <scope>COFACTOR</scope>
    <scope>MUTAGENESIS OF ASP-222 AND ASP-327</scope>
    <scope>CATALYTIC ACTIVITY</scope>
</reference>
<reference evidence="113 114 116" key="31">
    <citation type="journal article" date="2013" name="Nucleic Acids Res.">
        <title>Alteration in the cavity size adjacent to the active site of RB69 DNA polymerase changes its conformational dynamics.</title>
        <authorList>
            <person name="Xia S."/>
            <person name="Wood M."/>
            <person name="Bradley M.J."/>
            <person name="De La Cruz E.M."/>
            <person name="Konigsberg W.H."/>
        </authorList>
    </citation>
    <scope>X-RAY CRYSTALLOGRAPHY (1.80 ANGSTROMS) OF 1-901 IN COMPLEX WITH ATP; CALCIUM AND TTP</scope>
    <scope>MUTAGENESIS OF LEU-415</scope>
    <scope>COFACTOR</scope>
</reference>
<reference evidence="111 112 117" key="32">
    <citation type="journal article" date="2013" name="PLoS ONE">
        <title>A remote palm domain residue of RB69 DNA polymerase is critical for enzyme activity and influences the conformation of the active site.</title>
        <authorList>
            <person name="Jacewicz A."/>
            <person name="Trzemecka A."/>
            <person name="Guja K.E."/>
            <person name="Plochocka D."/>
            <person name="Yakubovskaya E."/>
            <person name="Bebenek A."/>
            <person name="Garcia-Diaz M."/>
        </authorList>
    </citation>
    <scope>X-RAY CRYSTALLOGRAPHY (2.30 ANGSTROMS)</scope>
    <scope>MUTAGENESIS OF ASP-714</scope>
    <scope>CATALYTIC ACTIVITY</scope>
    <scope>COFACTOR</scope>
</reference>
<reference evidence="118 119 120 121 122 123 124" key="33">
    <citation type="journal article" date="2013" name="Proc. Natl. Acad. Sci. U.S.A.">
        <title>Structure-function analysis of ribonucleotide bypass by B family DNA replicases.</title>
        <authorList>
            <person name="Clausen A.R."/>
            <person name="Murray M.S."/>
            <person name="Passer A.R."/>
            <person name="Pedersen L.C."/>
            <person name="Kunkel T.A."/>
        </authorList>
    </citation>
    <scope>X-RAY CRYSTALLOGRAPHY (2.05 ANGSTROMS) IN COMPLEX WITH CALCIUM AND TTP</scope>
</reference>
<reference evidence="125 126 127 128 129 130 131 132 133 134" key="34">
    <citation type="journal article" date="2014" name="Protein Sci.">
        <title>Mispairs with Watson-Crick base-pair geometry observed in ternary complexes of an RB69 DNA polymerase variant.</title>
        <authorList>
            <person name="Xia S."/>
            <person name="Konigsberg W.H."/>
        </authorList>
    </citation>
    <scope>X-RAY CRYSTALLOGRAPHY (1.84 ANGSTROMS) IN COMPLEX WITH ATP AND CALCIUM</scope>
</reference>
<organism>
    <name type="scientific">Escherichia phage RB69</name>
    <name type="common">Bacteriophage RB69</name>
    <dbReference type="NCBI Taxonomy" id="12353"/>
    <lineage>
        <taxon>Viruses</taxon>
        <taxon>Duplodnaviria</taxon>
        <taxon>Heunggongvirae</taxon>
        <taxon>Uroviricota</taxon>
        <taxon>Caudoviricetes</taxon>
        <taxon>Straboviridae</taxon>
        <taxon>Tevenvirinae</taxon>
        <taxon>Mosigvirus</taxon>
        <taxon>Mosigvirus RB69</taxon>
    </lineage>
</organism>
<comment type="function">
    <text evidence="1 5 7 16 17">Replicates the viral genomic DNA. This polymerase possesses two enzymatic activities: DNA synthesis (polymerase) and an exonucleolytic activity that degrades single-stranded DNA in the 3'- to 5'-direction for proofreading purpose.</text>
</comment>
<comment type="catalytic activity">
    <reaction evidence="1 5 7 11 17 20">
        <text>DNA(n) + a 2'-deoxyribonucleoside 5'-triphosphate = DNA(n+1) + diphosphate</text>
        <dbReference type="Rhea" id="RHEA:22508"/>
        <dbReference type="Rhea" id="RHEA-COMP:17339"/>
        <dbReference type="Rhea" id="RHEA-COMP:17340"/>
        <dbReference type="ChEBI" id="CHEBI:33019"/>
        <dbReference type="ChEBI" id="CHEBI:61560"/>
        <dbReference type="ChEBI" id="CHEBI:173112"/>
        <dbReference type="EC" id="2.7.7.7"/>
    </reaction>
</comment>
<comment type="cofactor">
    <cofactor evidence="1 9 15 22 23 24 25 26 27 29 30 31 32 33 34 35">
        <name>Mg(2+)</name>
        <dbReference type="ChEBI" id="CHEBI:18420"/>
    </cofactor>
</comment>
<comment type="subunit">
    <text evidence="1 2">Part of the replicase complex that includes the DNA polymerase, the polymerase clamp, the clamp loader complex, the single-stranded DNA binding protein, and the primase/helicase (By similarity). Interacts with the polymerase clamp; this interaction constitutes the polymerase holoenzyme (PubMed:10535734).</text>
</comment>
<comment type="domain">
    <text evidence="1 21">The N-terminus contains the 3'-5' exonuclease activity (PubMed:9215631). The C-terminus contains the polymerase activity and is involved in binding to the polymerase clamp protein (PubMed:9215631). A beta hairpin structure is necessary for the proofreading function of the polymerase (By similarity).</text>
</comment>
<comment type="similarity">
    <text evidence="1">Belongs to the DNA polymerase type-B family.</text>
</comment>
<proteinExistence type="evidence at protein level"/>
<dbReference type="EC" id="2.7.7.7" evidence="1 5 7 11 17 20"/>
<dbReference type="EC" id="3.1.11.-" evidence="1 5 18 20"/>
<dbReference type="EMBL" id="U34036">
    <property type="protein sequence ID" value="AAA93077.1"/>
    <property type="molecule type" value="Genomic_DNA"/>
</dbReference>
<dbReference type="EMBL" id="AY303349">
    <property type="protein sequence ID" value="AAP75958.1"/>
    <property type="molecule type" value="Genomic_DNA"/>
</dbReference>
<dbReference type="RefSeq" id="NP_861746.1">
    <property type="nucleotide sequence ID" value="NC_004928.1"/>
</dbReference>
<dbReference type="PDB" id="1B8H">
    <property type="method" value="X-ray"/>
    <property type="resolution" value="3.00 A"/>
    <property type="chains" value="D=893-903"/>
</dbReference>
<dbReference type="PDB" id="1CLQ">
    <property type="method" value="X-ray"/>
    <property type="resolution" value="2.70 A"/>
    <property type="chains" value="A=1-903"/>
</dbReference>
<dbReference type="PDB" id="1IG9">
    <property type="method" value="X-ray"/>
    <property type="resolution" value="2.60 A"/>
    <property type="chains" value="A=1-903"/>
</dbReference>
<dbReference type="PDB" id="1IH7">
    <property type="method" value="X-ray"/>
    <property type="resolution" value="2.21 A"/>
    <property type="chains" value="A=1-903"/>
</dbReference>
<dbReference type="PDB" id="1Q9X">
    <property type="method" value="X-ray"/>
    <property type="resolution" value="2.69 A"/>
    <property type="chains" value="A/B/C/D=1-903"/>
</dbReference>
<dbReference type="PDB" id="1Q9Y">
    <property type="method" value="X-ray"/>
    <property type="resolution" value="2.80 A"/>
    <property type="chains" value="A=1-903"/>
</dbReference>
<dbReference type="PDB" id="1WAF">
    <property type="method" value="X-ray"/>
    <property type="resolution" value="3.20 A"/>
    <property type="chains" value="A/B=1-903"/>
</dbReference>
<dbReference type="PDB" id="1WAJ">
    <property type="method" value="X-ray"/>
    <property type="resolution" value="2.80 A"/>
    <property type="chains" value="A=1-903"/>
</dbReference>
<dbReference type="PDB" id="2ATQ">
    <property type="method" value="X-ray"/>
    <property type="resolution" value="3.20 A"/>
    <property type="chains" value="A=1-903"/>
</dbReference>
<dbReference type="PDB" id="2DTU">
    <property type="method" value="X-ray"/>
    <property type="resolution" value="2.37 A"/>
    <property type="chains" value="A/B/C/D=1-902"/>
</dbReference>
<dbReference type="PDB" id="2DY4">
    <property type="method" value="X-ray"/>
    <property type="resolution" value="2.65 A"/>
    <property type="chains" value="A/B/C/D=1-903"/>
</dbReference>
<dbReference type="PDB" id="2OYQ">
    <property type="method" value="X-ray"/>
    <property type="resolution" value="2.86 A"/>
    <property type="chains" value="A/B/C/D=1-903"/>
</dbReference>
<dbReference type="PDB" id="2OZM">
    <property type="method" value="X-ray"/>
    <property type="resolution" value="2.86 A"/>
    <property type="chains" value="A=1-903"/>
</dbReference>
<dbReference type="PDB" id="2OZS">
    <property type="method" value="X-ray"/>
    <property type="resolution" value="2.75 A"/>
    <property type="chains" value="A=1-903"/>
</dbReference>
<dbReference type="PDB" id="2P5G">
    <property type="method" value="X-ray"/>
    <property type="resolution" value="2.80 A"/>
    <property type="chains" value="A/B/C/D=1-903"/>
</dbReference>
<dbReference type="PDB" id="2P5O">
    <property type="method" value="X-ray"/>
    <property type="resolution" value="2.80 A"/>
    <property type="chains" value="A/B/C/D=1-903"/>
</dbReference>
<dbReference type="PDB" id="3CFO">
    <property type="method" value="X-ray"/>
    <property type="resolution" value="2.60 A"/>
    <property type="chains" value="A=1-903"/>
</dbReference>
<dbReference type="PDB" id="3CFP">
    <property type="method" value="X-ray"/>
    <property type="resolution" value="2.50 A"/>
    <property type="chains" value="A=1-903"/>
</dbReference>
<dbReference type="PDB" id="3CFR">
    <property type="method" value="X-ray"/>
    <property type="resolution" value="2.40 A"/>
    <property type="chains" value="A=1-903"/>
</dbReference>
<dbReference type="PDB" id="3CQ8">
    <property type="method" value="X-ray"/>
    <property type="resolution" value="2.50 A"/>
    <property type="chains" value="A=1-903"/>
</dbReference>
<dbReference type="PDB" id="3KD1">
    <property type="method" value="X-ray"/>
    <property type="resolution" value="2.66 A"/>
    <property type="chains" value="E=1-903"/>
</dbReference>
<dbReference type="PDB" id="3KD5">
    <property type="method" value="X-ray"/>
    <property type="resolution" value="2.69 A"/>
    <property type="chains" value="E=1-903"/>
</dbReference>
<dbReference type="PDB" id="3L8B">
    <property type="method" value="X-ray"/>
    <property type="resolution" value="2.15 A"/>
    <property type="chains" value="A/B=1-903"/>
</dbReference>
<dbReference type="PDB" id="3LDS">
    <property type="method" value="X-ray"/>
    <property type="resolution" value="3.00 A"/>
    <property type="chains" value="A=1-903"/>
</dbReference>
<dbReference type="PDB" id="3LZI">
    <property type="method" value="X-ray"/>
    <property type="resolution" value="2.30 A"/>
    <property type="chains" value="A=1-903"/>
</dbReference>
<dbReference type="PDB" id="3LZJ">
    <property type="method" value="X-ray"/>
    <property type="resolution" value="2.05 A"/>
    <property type="chains" value="A=1-903"/>
</dbReference>
<dbReference type="PDB" id="3NAE">
    <property type="method" value="X-ray"/>
    <property type="resolution" value="2.00 A"/>
    <property type="chains" value="A=1-903"/>
</dbReference>
<dbReference type="PDB" id="3NCI">
    <property type="method" value="X-ray"/>
    <property type="resolution" value="1.79 A"/>
    <property type="chains" value="A=1-903"/>
</dbReference>
<dbReference type="PDB" id="3NDK">
    <property type="method" value="X-ray"/>
    <property type="resolution" value="2.00 A"/>
    <property type="chains" value="A=1-903"/>
</dbReference>
<dbReference type="PDB" id="3NE6">
    <property type="method" value="X-ray"/>
    <property type="resolution" value="2.00 A"/>
    <property type="chains" value="A=1-903"/>
</dbReference>
<dbReference type="PDB" id="3NGI">
    <property type="method" value="X-ray"/>
    <property type="resolution" value="1.89 A"/>
    <property type="chains" value="A=1-903"/>
</dbReference>
<dbReference type="PDB" id="3NHG">
    <property type="method" value="X-ray"/>
    <property type="resolution" value="2.50 A"/>
    <property type="chains" value="A=1-903"/>
</dbReference>
<dbReference type="PDB" id="3QEI">
    <property type="method" value="X-ray"/>
    <property type="resolution" value="2.18 A"/>
    <property type="chains" value="A=1-903"/>
</dbReference>
<dbReference type="PDB" id="3QEP">
    <property type="method" value="X-ray"/>
    <property type="resolution" value="1.80 A"/>
    <property type="chains" value="A=1-903"/>
</dbReference>
<dbReference type="PDB" id="3QER">
    <property type="method" value="X-ray"/>
    <property type="resolution" value="1.96 A"/>
    <property type="chains" value="A=1-903"/>
</dbReference>
<dbReference type="PDB" id="3QES">
    <property type="method" value="X-ray"/>
    <property type="resolution" value="1.98 A"/>
    <property type="chains" value="A=1-903"/>
</dbReference>
<dbReference type="PDB" id="3QET">
    <property type="method" value="X-ray"/>
    <property type="resolution" value="2.08 A"/>
    <property type="chains" value="A=1-903"/>
</dbReference>
<dbReference type="PDB" id="3QEV">
    <property type="method" value="X-ray"/>
    <property type="resolution" value="1.77 A"/>
    <property type="chains" value="A=1-903"/>
</dbReference>
<dbReference type="PDB" id="3QEW">
    <property type="method" value="X-ray"/>
    <property type="resolution" value="1.84 A"/>
    <property type="chains" value="A=1-903"/>
</dbReference>
<dbReference type="PDB" id="3QEX">
    <property type="method" value="X-ray"/>
    <property type="resolution" value="1.73 A"/>
    <property type="chains" value="A=1-903"/>
</dbReference>
<dbReference type="PDB" id="3QNN">
    <property type="method" value="X-ray"/>
    <property type="resolution" value="1.92 A"/>
    <property type="chains" value="A=1-901"/>
</dbReference>
<dbReference type="PDB" id="3QNO">
    <property type="method" value="X-ray"/>
    <property type="resolution" value="1.88 A"/>
    <property type="chains" value="A=1-901"/>
</dbReference>
<dbReference type="PDB" id="3RMA">
    <property type="method" value="X-ray"/>
    <property type="resolution" value="2.84 A"/>
    <property type="chains" value="A/B/C/D=1-903"/>
</dbReference>
<dbReference type="PDB" id="3RMB">
    <property type="method" value="X-ray"/>
    <property type="resolution" value="2.65 A"/>
    <property type="chains" value="A/B/C/D=1-903"/>
</dbReference>
<dbReference type="PDB" id="3RMC">
    <property type="method" value="X-ray"/>
    <property type="resolution" value="3.00 A"/>
    <property type="chains" value="A/B/C/D=1-903"/>
</dbReference>
<dbReference type="PDB" id="3RMD">
    <property type="method" value="X-ray"/>
    <property type="resolution" value="2.98 A"/>
    <property type="chains" value="A/B/C/D=1-903"/>
</dbReference>
<dbReference type="PDB" id="3RWU">
    <property type="method" value="X-ray"/>
    <property type="resolution" value="2.33 A"/>
    <property type="chains" value="A=1-901"/>
</dbReference>
<dbReference type="PDB" id="3S9H">
    <property type="method" value="X-ray"/>
    <property type="resolution" value="1.95 A"/>
    <property type="chains" value="A=1-903"/>
</dbReference>
<dbReference type="PDB" id="3SCX">
    <property type="method" value="X-ray"/>
    <property type="resolution" value="2.35 A"/>
    <property type="chains" value="A=1-901"/>
</dbReference>
<dbReference type="PDB" id="3SI6">
    <property type="method" value="X-ray"/>
    <property type="resolution" value="1.85 A"/>
    <property type="chains" value="A=1-901"/>
</dbReference>
<dbReference type="PDB" id="3SJJ">
    <property type="method" value="X-ray"/>
    <property type="resolution" value="2.38 A"/>
    <property type="chains" value="A=1-901"/>
</dbReference>
<dbReference type="PDB" id="3SNN">
    <property type="method" value="X-ray"/>
    <property type="resolution" value="2.00 A"/>
    <property type="chains" value="A=1-901"/>
</dbReference>
<dbReference type="PDB" id="3SPY">
    <property type="method" value="X-ray"/>
    <property type="resolution" value="2.14 A"/>
    <property type="chains" value="A=1-901"/>
</dbReference>
<dbReference type="PDB" id="3SPZ">
    <property type="method" value="X-ray"/>
    <property type="resolution" value="2.43 A"/>
    <property type="chains" value="A=1-903"/>
</dbReference>
<dbReference type="PDB" id="3SQ0">
    <property type="method" value="X-ray"/>
    <property type="resolution" value="2.00 A"/>
    <property type="chains" value="A=1-903"/>
</dbReference>
<dbReference type="PDB" id="3SQ1">
    <property type="method" value="X-ray"/>
    <property type="resolution" value="1.82 A"/>
    <property type="chains" value="A=1-901"/>
</dbReference>
<dbReference type="PDB" id="3SQ2">
    <property type="method" value="X-ray"/>
    <property type="resolution" value="2.10 A"/>
    <property type="chains" value="A=1-902"/>
</dbReference>
<dbReference type="PDB" id="3SQ4">
    <property type="method" value="X-ray"/>
    <property type="resolution" value="2.23 A"/>
    <property type="chains" value="A=1-902"/>
</dbReference>
<dbReference type="PDB" id="3SUN">
    <property type="method" value="X-ray"/>
    <property type="resolution" value="2.42 A"/>
    <property type="chains" value="A=1-895"/>
</dbReference>
<dbReference type="PDB" id="3SUO">
    <property type="method" value="X-ray"/>
    <property type="resolution" value="2.23 A"/>
    <property type="chains" value="A=1-900"/>
</dbReference>
<dbReference type="PDB" id="3SUP">
    <property type="method" value="X-ray"/>
    <property type="resolution" value="2.32 A"/>
    <property type="chains" value="A=1-903"/>
</dbReference>
<dbReference type="PDB" id="3SUQ">
    <property type="method" value="X-ray"/>
    <property type="resolution" value="3.15 A"/>
    <property type="chains" value="A=1-897"/>
</dbReference>
<dbReference type="PDB" id="3TAB">
    <property type="method" value="X-ray"/>
    <property type="resolution" value="2.80 A"/>
    <property type="chains" value="A/B/C/D=1-903"/>
</dbReference>
<dbReference type="PDB" id="3TAE">
    <property type="method" value="X-ray"/>
    <property type="resolution" value="2.71 A"/>
    <property type="chains" value="A/B/C/D=1-903"/>
</dbReference>
<dbReference type="PDB" id="3TAF">
    <property type="method" value="X-ray"/>
    <property type="resolution" value="3.00 A"/>
    <property type="chains" value="A/B/C/D=1-903"/>
</dbReference>
<dbReference type="PDB" id="3TAG">
    <property type="method" value="X-ray"/>
    <property type="resolution" value="2.95 A"/>
    <property type="chains" value="A/B/C/D=1-903"/>
</dbReference>
<dbReference type="PDB" id="3UIQ">
    <property type="method" value="X-ray"/>
    <property type="resolution" value="1.88 A"/>
    <property type="chains" value="A=1-903"/>
</dbReference>
<dbReference type="PDB" id="4DTJ">
    <property type="method" value="X-ray"/>
    <property type="resolution" value="1.90 A"/>
    <property type="chains" value="A=1-901"/>
</dbReference>
<dbReference type="PDB" id="4DTM">
    <property type="method" value="X-ray"/>
    <property type="resolution" value="1.95 A"/>
    <property type="chains" value="A=1-901"/>
</dbReference>
<dbReference type="PDB" id="4DTN">
    <property type="method" value="X-ray"/>
    <property type="resolution" value="1.96 A"/>
    <property type="chains" value="A=1-903"/>
</dbReference>
<dbReference type="PDB" id="4DTO">
    <property type="method" value="X-ray"/>
    <property type="resolution" value="2.05 A"/>
    <property type="chains" value="A=1-903"/>
</dbReference>
<dbReference type="PDB" id="4DTP">
    <property type="method" value="X-ray"/>
    <property type="resolution" value="2.05 A"/>
    <property type="chains" value="A=1-903"/>
</dbReference>
<dbReference type="PDB" id="4DTR">
    <property type="method" value="X-ray"/>
    <property type="resolution" value="2.04 A"/>
    <property type="chains" value="A=1-903"/>
</dbReference>
<dbReference type="PDB" id="4DTS">
    <property type="method" value="X-ray"/>
    <property type="resolution" value="1.96 A"/>
    <property type="chains" value="A=1-903"/>
</dbReference>
<dbReference type="PDB" id="4DTU">
    <property type="method" value="X-ray"/>
    <property type="resolution" value="1.86 A"/>
    <property type="chains" value="A=1-903"/>
</dbReference>
<dbReference type="PDB" id="4DTX">
    <property type="method" value="X-ray"/>
    <property type="resolution" value="1.84 A"/>
    <property type="chains" value="A=1-903"/>
</dbReference>
<dbReference type="PDB" id="4DU1">
    <property type="method" value="X-ray"/>
    <property type="resolution" value="2.15 A"/>
    <property type="chains" value="A=1-903"/>
</dbReference>
<dbReference type="PDB" id="4DU3">
    <property type="method" value="X-ray"/>
    <property type="resolution" value="2.02 A"/>
    <property type="chains" value="A=1-903"/>
</dbReference>
<dbReference type="PDB" id="4DU4">
    <property type="method" value="X-ray"/>
    <property type="resolution" value="2.28 A"/>
    <property type="chains" value="A=1-903"/>
</dbReference>
<dbReference type="PDB" id="4E3S">
    <property type="method" value="X-ray"/>
    <property type="resolution" value="2.04 A"/>
    <property type="chains" value="A=1-903"/>
</dbReference>
<dbReference type="PDB" id="4FJ5">
    <property type="method" value="X-ray"/>
    <property type="resolution" value="2.05 A"/>
    <property type="chains" value="A=1-903"/>
</dbReference>
<dbReference type="PDB" id="4FJ7">
    <property type="method" value="X-ray"/>
    <property type="resolution" value="1.90 A"/>
    <property type="chains" value="A=1-903"/>
</dbReference>
<dbReference type="PDB" id="4FJ8">
    <property type="method" value="X-ray"/>
    <property type="resolution" value="2.19 A"/>
    <property type="chains" value="A=1-903"/>
</dbReference>
<dbReference type="PDB" id="4FJ9">
    <property type="method" value="X-ray"/>
    <property type="resolution" value="1.97 A"/>
    <property type="chains" value="A=1-903"/>
</dbReference>
<dbReference type="PDB" id="4FJG">
    <property type="method" value="X-ray"/>
    <property type="resolution" value="2.02 A"/>
    <property type="chains" value="A=1-903"/>
</dbReference>
<dbReference type="PDB" id="4FJH">
    <property type="method" value="X-ray"/>
    <property type="resolution" value="2.11 A"/>
    <property type="chains" value="A=1-903"/>
</dbReference>
<dbReference type="PDB" id="4FJI">
    <property type="method" value="X-ray"/>
    <property type="resolution" value="2.20 A"/>
    <property type="chains" value="A=1-903"/>
</dbReference>
<dbReference type="PDB" id="4FJJ">
    <property type="method" value="X-ray"/>
    <property type="resolution" value="1.99 A"/>
    <property type="chains" value="A=1-903"/>
</dbReference>
<dbReference type="PDB" id="4FJK">
    <property type="method" value="X-ray"/>
    <property type="resolution" value="2.00 A"/>
    <property type="chains" value="A=1-903"/>
</dbReference>
<dbReference type="PDB" id="4FJL">
    <property type="method" value="X-ray"/>
    <property type="resolution" value="1.87 A"/>
    <property type="chains" value="A=1-903"/>
</dbReference>
<dbReference type="PDB" id="4FJM">
    <property type="method" value="X-ray"/>
    <property type="resolution" value="2.02 A"/>
    <property type="chains" value="A=1-903"/>
</dbReference>
<dbReference type="PDB" id="4FJN">
    <property type="method" value="X-ray"/>
    <property type="resolution" value="1.98 A"/>
    <property type="chains" value="A=1-903"/>
</dbReference>
<dbReference type="PDB" id="4FJX">
    <property type="method" value="X-ray"/>
    <property type="resolution" value="2.11 A"/>
    <property type="chains" value="A=1-903"/>
</dbReference>
<dbReference type="PDB" id="4FK0">
    <property type="method" value="X-ray"/>
    <property type="resolution" value="2.18 A"/>
    <property type="chains" value="A=1-903"/>
</dbReference>
<dbReference type="PDB" id="4FK2">
    <property type="method" value="X-ray"/>
    <property type="resolution" value="1.98 A"/>
    <property type="chains" value="A=1-903"/>
</dbReference>
<dbReference type="PDB" id="4FK4">
    <property type="method" value="X-ray"/>
    <property type="resolution" value="1.90 A"/>
    <property type="chains" value="A=1-903"/>
</dbReference>
<dbReference type="PDB" id="4I9L">
    <property type="method" value="X-ray"/>
    <property type="resolution" value="2.60 A"/>
    <property type="chains" value="A=1-903"/>
</dbReference>
<dbReference type="PDB" id="4I9Q">
    <property type="method" value="X-ray"/>
    <property type="resolution" value="2.30 A"/>
    <property type="chains" value="A/B=1-903"/>
</dbReference>
<dbReference type="PDB" id="4J2A">
    <property type="method" value="X-ray"/>
    <property type="resolution" value="1.80 A"/>
    <property type="chains" value="A=1-901"/>
</dbReference>
<dbReference type="PDB" id="4J2B">
    <property type="method" value="X-ray"/>
    <property type="resolution" value="2.04 A"/>
    <property type="chains" value="A=1-901"/>
</dbReference>
<dbReference type="PDB" id="4J2D">
    <property type="method" value="X-ray"/>
    <property type="resolution" value="1.76 A"/>
    <property type="chains" value="A=1-901"/>
</dbReference>
<dbReference type="PDB" id="4J2E">
    <property type="method" value="X-ray"/>
    <property type="resolution" value="2.02 A"/>
    <property type="chains" value="A=1-901"/>
</dbReference>
<dbReference type="PDB" id="4KHN">
    <property type="method" value="X-ray"/>
    <property type="resolution" value="2.55 A"/>
    <property type="chains" value="A/B=1-903"/>
</dbReference>
<dbReference type="PDB" id="4KHQ">
    <property type="method" value="X-ray"/>
    <property type="resolution" value="2.19 A"/>
    <property type="chains" value="A=1-903"/>
</dbReference>
<dbReference type="PDB" id="4KHS">
    <property type="method" value="X-ray"/>
    <property type="resolution" value="2.12 A"/>
    <property type="chains" value="A=1-903"/>
</dbReference>
<dbReference type="PDB" id="4KHU">
    <property type="method" value="X-ray"/>
    <property type="resolution" value="2.05 A"/>
    <property type="chains" value="A=1-903"/>
</dbReference>
<dbReference type="PDB" id="4KHW">
    <property type="method" value="X-ray"/>
    <property type="resolution" value="2.37 A"/>
    <property type="chains" value="A=1-903"/>
</dbReference>
<dbReference type="PDB" id="4KHY">
    <property type="method" value="X-ray"/>
    <property type="resolution" value="2.25 A"/>
    <property type="chains" value="A=1-903"/>
</dbReference>
<dbReference type="PDB" id="4KI4">
    <property type="method" value="X-ray"/>
    <property type="resolution" value="2.45 A"/>
    <property type="chains" value="A=1-903"/>
</dbReference>
<dbReference type="PDB" id="4KI6">
    <property type="method" value="X-ray"/>
    <property type="resolution" value="2.55 A"/>
    <property type="chains" value="A=1-903"/>
</dbReference>
<dbReference type="PDB" id="4M3R">
    <property type="method" value="X-ray"/>
    <property type="resolution" value="2.07 A"/>
    <property type="chains" value="A=1-903"/>
</dbReference>
<dbReference type="PDB" id="4M3T">
    <property type="method" value="X-ray"/>
    <property type="resolution" value="1.90 A"/>
    <property type="chains" value="A=1-903"/>
</dbReference>
<dbReference type="PDB" id="4M3U">
    <property type="method" value="X-ray"/>
    <property type="resolution" value="2.07 A"/>
    <property type="chains" value="A=1-903"/>
</dbReference>
<dbReference type="PDB" id="4M3W">
    <property type="method" value="X-ray"/>
    <property type="resolution" value="2.10 A"/>
    <property type="chains" value="A=1-903"/>
</dbReference>
<dbReference type="PDB" id="4M3X">
    <property type="method" value="X-ray"/>
    <property type="resolution" value="2.20 A"/>
    <property type="chains" value="A=1-903"/>
</dbReference>
<dbReference type="PDB" id="4M3Y">
    <property type="method" value="X-ray"/>
    <property type="resolution" value="1.86 A"/>
    <property type="chains" value="A=1-903"/>
</dbReference>
<dbReference type="PDB" id="4M3Z">
    <property type="method" value="X-ray"/>
    <property type="resolution" value="1.84 A"/>
    <property type="chains" value="A=1-903"/>
</dbReference>
<dbReference type="PDB" id="4M41">
    <property type="method" value="X-ray"/>
    <property type="resolution" value="2.15 A"/>
    <property type="chains" value="A=1-903"/>
</dbReference>
<dbReference type="PDB" id="4M42">
    <property type="method" value="X-ray"/>
    <property type="resolution" value="2.04 A"/>
    <property type="chains" value="A=1-903"/>
</dbReference>
<dbReference type="PDB" id="4M45">
    <property type="method" value="X-ray"/>
    <property type="resolution" value="1.89 A"/>
    <property type="chains" value="A=1-903"/>
</dbReference>
<dbReference type="PDB" id="7F4Y">
    <property type="method" value="X-ray"/>
    <property type="resolution" value="2.20 A"/>
    <property type="chains" value="A/B=1-903"/>
</dbReference>
<dbReference type="PDBsum" id="1B8H"/>
<dbReference type="PDBsum" id="1CLQ"/>
<dbReference type="PDBsum" id="1IG9"/>
<dbReference type="PDBsum" id="1IH7"/>
<dbReference type="PDBsum" id="1Q9X"/>
<dbReference type="PDBsum" id="1Q9Y"/>
<dbReference type="PDBsum" id="1WAF"/>
<dbReference type="PDBsum" id="1WAJ"/>
<dbReference type="PDBsum" id="2ATQ"/>
<dbReference type="PDBsum" id="2DTU"/>
<dbReference type="PDBsum" id="2DY4"/>
<dbReference type="PDBsum" id="2OYQ"/>
<dbReference type="PDBsum" id="2OZM"/>
<dbReference type="PDBsum" id="2OZS"/>
<dbReference type="PDBsum" id="2P5G"/>
<dbReference type="PDBsum" id="2P5O"/>
<dbReference type="PDBsum" id="3CFO"/>
<dbReference type="PDBsum" id="3CFP"/>
<dbReference type="PDBsum" id="3CFR"/>
<dbReference type="PDBsum" id="3CQ8"/>
<dbReference type="PDBsum" id="3KD1"/>
<dbReference type="PDBsum" id="3KD5"/>
<dbReference type="PDBsum" id="3L8B"/>
<dbReference type="PDBsum" id="3LDS"/>
<dbReference type="PDBsum" id="3LZI"/>
<dbReference type="PDBsum" id="3LZJ"/>
<dbReference type="PDBsum" id="3NAE"/>
<dbReference type="PDBsum" id="3NCI"/>
<dbReference type="PDBsum" id="3NDK"/>
<dbReference type="PDBsum" id="3NE6"/>
<dbReference type="PDBsum" id="3NGI"/>
<dbReference type="PDBsum" id="3NHG"/>
<dbReference type="PDBsum" id="3QEI"/>
<dbReference type="PDBsum" id="3QEP"/>
<dbReference type="PDBsum" id="3QER"/>
<dbReference type="PDBsum" id="3QES"/>
<dbReference type="PDBsum" id="3QET"/>
<dbReference type="PDBsum" id="3QEV"/>
<dbReference type="PDBsum" id="3QEW"/>
<dbReference type="PDBsum" id="3QEX"/>
<dbReference type="PDBsum" id="3QNN"/>
<dbReference type="PDBsum" id="3QNO"/>
<dbReference type="PDBsum" id="3RMA"/>
<dbReference type="PDBsum" id="3RMB"/>
<dbReference type="PDBsum" id="3RMC"/>
<dbReference type="PDBsum" id="3RMD"/>
<dbReference type="PDBsum" id="3RWU"/>
<dbReference type="PDBsum" id="3S9H"/>
<dbReference type="PDBsum" id="3SCX"/>
<dbReference type="PDBsum" id="3SI6"/>
<dbReference type="PDBsum" id="3SJJ"/>
<dbReference type="PDBsum" id="3SNN"/>
<dbReference type="PDBsum" id="3SPY"/>
<dbReference type="PDBsum" id="3SPZ"/>
<dbReference type="PDBsum" id="3SQ0"/>
<dbReference type="PDBsum" id="3SQ1"/>
<dbReference type="PDBsum" id="3SQ2"/>
<dbReference type="PDBsum" id="3SQ4"/>
<dbReference type="PDBsum" id="3SUN"/>
<dbReference type="PDBsum" id="3SUO"/>
<dbReference type="PDBsum" id="3SUP"/>
<dbReference type="PDBsum" id="3SUQ"/>
<dbReference type="PDBsum" id="3TAB"/>
<dbReference type="PDBsum" id="3TAE"/>
<dbReference type="PDBsum" id="3TAF"/>
<dbReference type="PDBsum" id="3TAG"/>
<dbReference type="PDBsum" id="3UIQ"/>
<dbReference type="PDBsum" id="4DTJ"/>
<dbReference type="PDBsum" id="4DTM"/>
<dbReference type="PDBsum" id="4DTN"/>
<dbReference type="PDBsum" id="4DTO"/>
<dbReference type="PDBsum" id="4DTP"/>
<dbReference type="PDBsum" id="4DTR"/>
<dbReference type="PDBsum" id="4DTS"/>
<dbReference type="PDBsum" id="4DTU"/>
<dbReference type="PDBsum" id="4DTX"/>
<dbReference type="PDBsum" id="4DU1"/>
<dbReference type="PDBsum" id="4DU3"/>
<dbReference type="PDBsum" id="4DU4"/>
<dbReference type="PDBsum" id="4E3S"/>
<dbReference type="PDBsum" id="4FJ5"/>
<dbReference type="PDBsum" id="4FJ7"/>
<dbReference type="PDBsum" id="4FJ8"/>
<dbReference type="PDBsum" id="4FJ9"/>
<dbReference type="PDBsum" id="4FJG"/>
<dbReference type="PDBsum" id="4FJH"/>
<dbReference type="PDBsum" id="4FJI"/>
<dbReference type="PDBsum" id="4FJJ"/>
<dbReference type="PDBsum" id="4FJK"/>
<dbReference type="PDBsum" id="4FJL"/>
<dbReference type="PDBsum" id="4FJM"/>
<dbReference type="PDBsum" id="4FJN"/>
<dbReference type="PDBsum" id="4FJX"/>
<dbReference type="PDBsum" id="4FK0"/>
<dbReference type="PDBsum" id="4FK2"/>
<dbReference type="PDBsum" id="4FK4"/>
<dbReference type="PDBsum" id="4I9L"/>
<dbReference type="PDBsum" id="4I9Q"/>
<dbReference type="PDBsum" id="4J2A"/>
<dbReference type="PDBsum" id="4J2B"/>
<dbReference type="PDBsum" id="4J2D"/>
<dbReference type="PDBsum" id="4J2E"/>
<dbReference type="PDBsum" id="4KHN"/>
<dbReference type="PDBsum" id="4KHQ"/>
<dbReference type="PDBsum" id="4KHS"/>
<dbReference type="PDBsum" id="4KHU"/>
<dbReference type="PDBsum" id="4KHW"/>
<dbReference type="PDBsum" id="4KHY"/>
<dbReference type="PDBsum" id="4KI4"/>
<dbReference type="PDBsum" id="4KI6"/>
<dbReference type="PDBsum" id="4M3R"/>
<dbReference type="PDBsum" id="4M3T"/>
<dbReference type="PDBsum" id="4M3U"/>
<dbReference type="PDBsum" id="4M3W"/>
<dbReference type="PDBsum" id="4M3X"/>
<dbReference type="PDBsum" id="4M3Y"/>
<dbReference type="PDBsum" id="4M3Z"/>
<dbReference type="PDBsum" id="4M41"/>
<dbReference type="PDBsum" id="4M42"/>
<dbReference type="PDBsum" id="4M45"/>
<dbReference type="PDBsum" id="7F4Y"/>
<dbReference type="SMR" id="Q38087"/>
<dbReference type="DrugBank" id="DB08245">
    <property type="generic name" value="1-(2-DEOXY-5-O-PHOSPHONO-BETA-D-ERYTHRO-PENTOFURANOSYL)-5-NITRO-1H-INDOLE"/>
</dbReference>
<dbReference type="DrugBank" id="DB02857">
    <property type="generic name" value="Guanosine"/>
</dbReference>
<dbReference type="DrugBank" id="DB01972">
    <property type="generic name" value="Guanosine-5'-Monophosphate"/>
</dbReference>
<dbReference type="GeneID" id="1494172"/>
<dbReference type="KEGG" id="vg:1494172"/>
<dbReference type="OrthoDB" id="165at10239"/>
<dbReference type="BRENDA" id="2.7.7.7">
    <property type="organism ID" value="9245"/>
</dbReference>
<dbReference type="SABIO-RK" id="Q38087"/>
<dbReference type="EvolutionaryTrace" id="Q38087"/>
<dbReference type="Proteomes" id="UP000000876">
    <property type="component" value="Genome"/>
</dbReference>
<dbReference type="GO" id="GO:0008408">
    <property type="term" value="F:3'-5' exonuclease activity"/>
    <property type="evidence" value="ECO:0000314"/>
    <property type="project" value="UniProtKB"/>
</dbReference>
<dbReference type="GO" id="GO:0003677">
    <property type="term" value="F:DNA binding"/>
    <property type="evidence" value="ECO:0007669"/>
    <property type="project" value="UniProtKB-UniRule"/>
</dbReference>
<dbReference type="GO" id="GO:0003887">
    <property type="term" value="F:DNA-directed DNA polymerase activity"/>
    <property type="evidence" value="ECO:0000314"/>
    <property type="project" value="UniProtKB"/>
</dbReference>
<dbReference type="GO" id="GO:0046872">
    <property type="term" value="F:metal ion binding"/>
    <property type="evidence" value="ECO:0007669"/>
    <property type="project" value="UniProtKB-KW"/>
</dbReference>
<dbReference type="GO" id="GO:0000166">
    <property type="term" value="F:nucleotide binding"/>
    <property type="evidence" value="ECO:0007669"/>
    <property type="project" value="UniProtKB-UniRule"/>
</dbReference>
<dbReference type="GO" id="GO:0039686">
    <property type="term" value="P:bidirectional double-stranded viral DNA replication"/>
    <property type="evidence" value="ECO:0007669"/>
    <property type="project" value="UniProtKB-UniRule"/>
</dbReference>
<dbReference type="GO" id="GO:0006261">
    <property type="term" value="P:DNA-templated DNA replication"/>
    <property type="evidence" value="ECO:0007669"/>
    <property type="project" value="TreeGrafter"/>
</dbReference>
<dbReference type="CDD" id="cd05160">
    <property type="entry name" value="DEDDy_DNA_polB_exo"/>
    <property type="match status" value="1"/>
</dbReference>
<dbReference type="CDD" id="cd00145">
    <property type="entry name" value="POLBc"/>
    <property type="match status" value="1"/>
</dbReference>
<dbReference type="FunFam" id="3.40.1820.10:FF:000001">
    <property type="entry name" value="DNA-directed DNA polymerase"/>
    <property type="match status" value="1"/>
</dbReference>
<dbReference type="Gene3D" id="1.20.1280.300">
    <property type="match status" value="1"/>
</dbReference>
<dbReference type="Gene3D" id="3.30.342.10">
    <property type="entry name" value="DNA Polymerase, chain B, domain 1"/>
    <property type="match status" value="1"/>
</dbReference>
<dbReference type="Gene3D" id="3.40.1820.10">
    <property type="entry name" value="DnaQ-like 3'-5' exonuclease"/>
    <property type="match status" value="1"/>
</dbReference>
<dbReference type="Gene3D" id="1.10.287.690">
    <property type="entry name" value="Helix hairpin bin"/>
    <property type="match status" value="1"/>
</dbReference>
<dbReference type="Gene3D" id="3.90.1600.10">
    <property type="entry name" value="Palm domain of DNA polymerase"/>
    <property type="match status" value="1"/>
</dbReference>
<dbReference type="Gene3D" id="3.30.420.10">
    <property type="entry name" value="Ribonuclease H-like superfamily/Ribonuclease H"/>
    <property type="match status" value="1"/>
</dbReference>
<dbReference type="HAMAP" id="MF_04100">
    <property type="entry name" value="DPOL_T4"/>
    <property type="match status" value="1"/>
</dbReference>
<dbReference type="InterPro" id="IPR006172">
    <property type="entry name" value="DNA-dir_DNA_pol_B"/>
</dbReference>
<dbReference type="InterPro" id="IPR017964">
    <property type="entry name" value="DNA-dir_DNA_pol_B_CS"/>
</dbReference>
<dbReference type="InterPro" id="IPR006133">
    <property type="entry name" value="DNA-dir_DNA_pol_B_exonuc"/>
</dbReference>
<dbReference type="InterPro" id="IPR006134">
    <property type="entry name" value="DNA-dir_DNA_pol_B_multi_dom"/>
</dbReference>
<dbReference type="InterPro" id="IPR043502">
    <property type="entry name" value="DNA/RNA_pol_sf"/>
</dbReference>
<dbReference type="InterPro" id="IPR023211">
    <property type="entry name" value="DNA_pol_palm_dom_sf"/>
</dbReference>
<dbReference type="InterPro" id="IPR050240">
    <property type="entry name" value="DNA_pol_type-B"/>
</dbReference>
<dbReference type="InterPro" id="IPR034749">
    <property type="entry name" value="DPOL_T4"/>
</dbReference>
<dbReference type="InterPro" id="IPR012337">
    <property type="entry name" value="RNaseH-like_sf"/>
</dbReference>
<dbReference type="InterPro" id="IPR036397">
    <property type="entry name" value="RNaseH_sf"/>
</dbReference>
<dbReference type="PANTHER" id="PTHR10322">
    <property type="entry name" value="DNA POLYMERASE CATALYTIC SUBUNIT"/>
    <property type="match status" value="1"/>
</dbReference>
<dbReference type="PANTHER" id="PTHR10322:SF23">
    <property type="entry name" value="DNA POLYMERASE DELTA CATALYTIC SUBUNIT"/>
    <property type="match status" value="1"/>
</dbReference>
<dbReference type="Pfam" id="PF00136">
    <property type="entry name" value="DNA_pol_B"/>
    <property type="match status" value="2"/>
</dbReference>
<dbReference type="Pfam" id="PF03104">
    <property type="entry name" value="DNA_pol_B_exo1"/>
    <property type="match status" value="1"/>
</dbReference>
<dbReference type="PRINTS" id="PR00106">
    <property type="entry name" value="DNAPOLB"/>
</dbReference>
<dbReference type="SMART" id="SM00486">
    <property type="entry name" value="POLBc"/>
    <property type="match status" value="1"/>
</dbReference>
<dbReference type="SUPFAM" id="SSF56672">
    <property type="entry name" value="DNA/RNA polymerases"/>
    <property type="match status" value="1"/>
</dbReference>
<dbReference type="SUPFAM" id="SSF53098">
    <property type="entry name" value="Ribonuclease H-like"/>
    <property type="match status" value="1"/>
</dbReference>
<dbReference type="PROSITE" id="PS00116">
    <property type="entry name" value="DNA_POLYMERASE_B"/>
    <property type="match status" value="1"/>
</dbReference>